<sequence>MASNHVTLAFANDAEISAFGFCTASEAVSYYSEAAASGFMQCRFVSLDLADTVEGLLPEDYVMVVIGTTKLSAYVDTFGSRPRNICGWLLFSNCNYFLEELELTFGRRGGNIVPVDQYMCGADGKPVLQESEWEYTDFFADSEDGQLNIAGITYVKAWIVERSDVSYASQNLTSIKSITYCSTYEHTFLDGTAMKVARTPKIKKNVVLSEPLATIYREIGSPFVDNGSDARSIIRRPVFLHAFVKCKCGSYHWTVGDWTSYVSTCCGFKCKPVLVASCSAMPGSVVVTRAGAGTGVKYYNNMFLRHVADIDGLAFWRILKVQSKDDLACSGKFLEHHEEGFTDPCYFLNDSSLATKLKFDILSGKFSDEVKQAIIAGHVVVGSALVDIVDDALGQPWFIRKLGDLASAPWEQLKAVVRGLGLLSDEVVLFGKRLSCATLSIVNGVFEFLADVPEKLAAAVTVFVNFLNEFFESACDCLKVGGKTFNKVGSYVLFDNALVKLVKAKARGPRQAGICEVRYTSLVVGSTTKVVSKRVENANVNLVVVDEDVTLNTTGRTVVVDGLAFFESDGFYRHLADADVVIEHPVYKSACELKPVFECDPIPDFPLPVAASVAELCVQTDLLLKNYNTPYKTYSCVVRGDKCCITCTLQFKAPSYVEDAVNFVDLCTKNIGTAGFHEFYITAHEQQDLQGFLTTCCTMSGFECFMPTIPQCPAVLEEIDGGSIWRSFITGLNTMWDFCKRLKVSFGLDGIVVTVARKFKRLGALLAEMYNTYLSTVVENLVLAGVSFKYYATSVPKIVLGGCFHSVKSVFASVFQIPVQAGIEKFKVFLNCVHPVVPRVIETSFVELEETTFKPPALNGGIAIVDGFAFYYDGTLYYPTDGNSVVPICFKKKGGGDVKFSDEVSVKTIDPVYKVSLEFEFESETIMAVLNKAVGNRIKVTGGWDDVVEYINVAIEVLKDHVEVPKYYIYDEEGGTDPNLPVMVSQWPLNDDTISQDLLDVEVVTDAPIDSEGDEVDSSAPEKVADVANSEPGDDGLPVAPETNVESEVEEVAATLSFIKDTPSTVTKDPFAFDFVSYGGLKVLRQSHNNCWVTSTLVQLQLLGIVDDPAMELFSAGRVGPMVRKCYESQKAILGSLGDVSACLESLTKDLHTLKITCSVVCGCGTGERIYEGCAFRMTPTLEPFPYGACAQCAQVLMHTFKSIVGTGIFCRDTTALSLDSLVVKPLCAAAFIGKDSGHYVTNFYDAAMAIDGYGRHQIKYDTLNTICVKDVNWTAPLVPAVDSVVEPVVKPFYSYKNVDFYQGDFSDLVKLPCDFVVNAANEKLSHGGGIAKAIDVYTKGMLQKCSNDYIKAHGPIKVGRGVMLEALGLKVFNVVGPRKGKHAPELLVKAYKSVFANSGVALTPLISVGIFSVPLEESLSAFLACVGDRHCKCFCYGDKEREAIIKYMDGLVDAIFKEALVDTTPVQEDVQQVSQKPVLPNFEPFRIEGAHAFYECNPEGLMSLGADKLVLFTNSNLDFCSVGKCLNDVTSGALLEAINVFKKSNKTVPAGNCVTLDCANMISITMVVLPFDGDANYDKNYARAVVKVSKLKGKLVLAVDDATLYSKLSHLSVLGFVSTPDDVERFYANKSVVIKVTEDTRSVKAVKVESTATYGQQIGPCLVNDTVVTDNKPVVADVVAKVVPNANWDSHYGFDKAGEFHMLDHTGFTFPSEVVNGRRVIKTTDNNCWVNVTCLQLQFARFRFKSAGLQAMWESYCTGDVAMFVHWLYWLTGVDKGQPSDSENALNMLSKYIVPAGSVTIERVTHDGCCCSKRVVTAPVVNASVLKLGVEDGLCPHGLNYIGKVVVVKGTTIVVNVGKPVVAPSHLFLKGVSYTTFLDNGNGVVGHYTVFDHGTGMVHDGDAFVPGDLNVSPVTNVVVSEQTAVVIKDPVKKAELDATKLLDTMNYASERFFSFGDFMSRNLITVFLYILSILGLCFRAFRKRDVKVLAGVPQRTGIILRKSMRYNAKALGVFFKLKLYWFKVLGKFSLGIYALYALLFMTIRFTPIGSPVCDDVVAGYANSSFDKNEYCNSVICKVCLYGYQELSDFSHTQVVWQHLRDPLIGNVMPFFYLAFLAIFGGVYVKAITLYFIFQYLNSLGVFLGLQQSIWFLQLVPFDVFGDEIVVFFIVTRVLMFIKHVCLGCDKASCVACSKSARLKRVPVQTIFQGTSKSFYVHANGGSKFCKKHNFFCLNCDSYGPGCTFINDVIATEVGNVVKLNVQPTGPATILIDKVEFSNGFYYLYSGDTFWKYNFDITDSKYTCKEALKNCSIITDFIVFNNNGSNVNQVKNACVYFSQMLCKPVKLVDSALLASLSVDFGASLHSAFVSVLSNSFGKDLSSCNDMQDCKSTLGFDDVPLDTFNAAVAEAHRYDVLLTDMSFNNFTTSYAKPEEKFPVHDIATCMRVGAKIVNHNVLVKDSIPVVWLVRDFIALSEETRKYIIRTTKVKGITFMLTFNDCRMHTTIPTVCIANKKGAGLPSFSKVKKFFWFLCLFIVAAFFALSFLDFSTQVSSDSDYDFKYIESGQLKTFDNPLSCVHNVFINFDQWHDAKFGFTPVNNPSCPIVVGVSDEARTVPGIPAGVYLAGKTLVFAINTIFGTSGLCFDASGVADKGACIFNSACTTLSGLGGTAVYCYKNGLVEGAKLYSELAPHSYYKMVDGNAVSLPEIISRGFGIRTIRTKAMTYCRVGQCVQSAEGVCFGADRFFVYNAESGSDFVCGTGLFTLLMNVISVFSKTVPVTVLSGQILFNCIIAFVAVAVCFLFTKFKRMFGDMSVGVFTVGACTLLNNVSYIVTQNTLGMLGYATLYFLCTKGVRYMWIWHLGFLISYILIAPWWVLMVYAFSAIFEFMPNLFKLKVSTQLFEGDKFVGSFENAAAGTFVLDMHAYERLANSISTEKLRQYASTYNKYKYYSGSASEADYRLACFAHLAKAMMDYASNHNDTLYTPPTVSYNSTLQAGLRKMAQPSGVVEKCIVRVCYGNMALNGLWLGDIVMCPRHVIASSTTSTIDYDYALSVLRLHNFSISSGNVFLGVVSATMRGALLQIKVNQNNVHTPKYTYRTVRPGESFNILACYDGAAAGVYGVNMRSNYTIRGSFINGACGSPGYNINNGTVEFCYLHQLELGSGCHVGSDLDGVMYGGYEDQPTLQVEGASSLFTENVLAFLYAALINGSTWWLSSSRIAVDRFNEWAVHNGMTTVGNTDCFSILAAKTGVDVQRLLASIQSLHKNFGGKQILGHTSLTDEFTTGEVVRQMYGVNLQGGYVSRACRNVLLVGSFLTFFWSELVSYTKFFWVNPGYVTPMFACLSLLSSLLMFTLKHKTLFFQVFLIPALIVTSCINLAFDVEVYNYLAEHFDYHVSLMGFNAQGLVNIFVCFVVTILHGTYTWRFFNTPASSVTYVVALLTAAYNYFYASDILSCAMTLFASVTGNWFVGAVCYKVAVYMALRFPTFVAIFGDIKSVMFCYLVLGYFTCCFYGILYWFNRFFKVSVGVYDYTVSAAEFKYMVANGLRAPTGTLDSLLLSAKLIGIGGERNIKISSVQSKLTDIKCSNVVLLGCLSSMNVSANSTEWAYCVDLHNKINLCNDPEKAQEMLLALLAFFLSKNSAFGLDDLLESYFNDNSMLQSVASTYVGLPSYVIYENARQQYEDAVNNGSPPQLVKQLRHAMNVAKSEFDREASTQRKLDRMAEQAAAQMYKEARAVNRKSKVVSAMHSLLFGMLRRLDMSSVDTILNLAKDGVVPLSVIPAVSATKLNIVTSDIDSYNRIQREGCVHYAGTIWNIIDIKDNDGKVVHVKEVTAQNAESLSWPLVLGCERIVKLQNNEIIPGKLKQRSIKAEGDGIVGEGKALYNNEGGRTFMYAFISDKPDLRVVKWEFDGGCNTIELEPPRKFLVDSPNGAQIKYLYFVRNLNTLRRGAVLGYIGATVRLQAGKQTEQAINSSLLTLCAFAVDPAKTYIDAVKSGHKPVGNCVKMLANGSGNGQAVTNGVEASTNQDSYGGASVCLYCRAHVEHPSMDGFCRLKGKYVQVPLGTVDPIRFVLENDVCKVCGCWLSNGCTCDRSIMQSTDMAYLNRVRGSSAARLEPCNGTDTQHVYRAFDIYNKDVACLGKFLKVNCVRLKNLDKHDAFYVVKRCTKSAMEHEQSIYSRLEKCGAIAEHDFFTWKDGRAIYGNVCRKDLTEYTMMDLCYALRNFDENNCDVLKSILIKVGACEESYFNNKVWFDPVENEDIHRVYALLGTIVARAMLKCVKFCDAMVEQGIVGVVTLDNQDLNGDFYDFGDFTCSIKGMGVPICTSYYSYMMPVMGMTNCLASECFVKSDIFGEDFKSYDLLEYDFTEHKTALFNKYFKYWGLQYHPNCVDCSDEQCIVHCANFNTLFSTTIPITAFGPLCRKCWIDGVPLVTTAGYHFKQLGIVWNNDLNLHSSRLSINELLQFCSDPALLIASSPALVDQRTVCFSVAALGTGMTNQTVKPGHFNKEFYDFLLEQGFFSEGSELTLKHFFFAQKVDAAVKDFDYYRYNRPTVLDICQARVVYQIVQRYFDIYEGGCITAKEVVVTNLNKSAGYPLNKFGKAGLYYESLSYEEQDELYAYTKRNILPTMTQLNLKYAISGKERARTVGGVSLLSTMTTRQYHQKHLKSIVNTRGASVVIGTTKFYGGWDNMLKNLIDGVENPCLMGWDYPKCDRALPNMIRMISAMILGSKHTTCCSSTDRFFRLCNELAQVLTEVVYSNGGFYLKPGGTTSGDATTAYANSVFNIFQAVSANVNKLLSVDSNVCHNLEVKQLQRKLYECCYRSTIVDDQFVVEYYGYLRKHFSMMILSDDGVVCYNNDYASLGYVADLNAFKAVLYYQNNVFMSASKCWIEPDINKGPHEFCSQHTMQIVDKEGTYYLPYPDPSRILSAGVFVDDVVKTDAVVLLERYVSLAIDAYPLSKHENPEYKKVFYVLLDWVKHLYKTLNAGVLESFSVTLLEDSTAKFWDESFYANMYEKSAVLQSAGLCVVCGSQTVLRCGDCLRRPMLCTKCAYDHVIGTTHKFILAITPYVCCASDCGVNDVTKLYLGGLSYWCHEHKPRLAFPLCSAGNVFGLYKNSATGSPDVEDFNRIATSDWTDVSDYRLANDVKDSLRLFAAETIKAKEESVKSSYACATLHEVVGPKELLLKWEVGRPKPPLNRNSVFTCYHITKNTKFQIGEFVFEKAEYDNDAVTYKTTATTKLVPGMVFVLTSHNVQPLRAPTIANQERYSTIHKLHPAFNIPEAYSSLVPYYQLIGKQKITTIQGPPGSGKSHCVIGLGLYYPGARIVFTACSHAAVDSLCVKASTAYSNDKCSRIIPQRARVECYDGFKSNNTSAQYLFSTVNALPECNADIVVVDEVSMCTNYDLSVINQRISYRHVVYVGDPQQLPAPRVMISRGTLEPKDYNVVTQRMCALKPDVFLHKCYRCPAEIVRTVSEMVYENQFIPVHPDSKQCFKIFCKGNVQVDNGSSINRRQLDVVRMFLAKNPRWSKAVFISPYNSQNYVASRLLGLQIQTVDSSQGSEYDYVIYAQTSDTAHASNVNRFNVAITRAKKGILCIMCDRSLFDLLKFFELKLSDLQANEGCGLFKDCSRGDDLLPPSHANTFMSLADNFKTDQYLAVQIGVNGPIKYEHVISFMGFRFDINIPNHHTLFCTRDFAMRNVRGWLGFDVEGAHVVGSNVGTNVPLQLGFSNGVDFVVRPEGCVVTESGDYIKPVRARAPPGEQFAHLLPLLKRGQPWDVVRKRIVQMCSDYLANLSDILIFVLWAGGLELTTMRYFVKIGPSKSCDCGKVATCYNSALHTYCCFKHALGCDYLYNPYCIDIQQWGYKGSLSLNHHEHCNVHRNEHVASGDAIMTRCLAIHDCFVKNVDWSITYPFIGNEAVINKSGRIVQSHTMRSVLKLYNPKAIYDIGNPKGIRCAVTDAKWFCFDKNPTNSNVKTLEYDYITHGQFDGLCLFWNCNVDMYPEFSVVCRFDTRCRSPLNLEGCNGGSLYVNNHAFHTPAFDKRAFAKLKPMPFFFYDDTECDKLQDSINYVPLRASNCITKCNVGGAVCSKHCAMYHSYVNAYNTFTSAGFTIWVPTSFDTYNLWQTFSNNLQGLENIAFNVLKKGSFVGDEGELPVAVVNDKVLVRDGTVDTLVFTNKTSLPTNVAFELYAKRKVGLTPPITILRNLGVVCTSKCVIWDYEAERPLTTFTKDVCKYTDFEGDVCTLFDNSIVGSLERFSMTQNAVLMSLTAVKKLTGIKLTYGYLNGVPVNTHEDKPFTWYIYTRKNGKFEDYPDGYFTQGRTTADFSPRSDMEKDFLSMDMGLFINKYGLEDYGFEHVVYGDVSKTTLGGLHLLISQVRLACMGVLKIDEFVSSNDSTLKSCTVTYADNPSSKMVCTYMDLLLDDFVSILKSLDLSVVSKVHEVMVDCKMWRWMLWCKDHKLQTFYPQLQASEWKCGYSMPSIYKIQRMCLEPCNLYNYGAGVKLPDGIMFNVVKYTQLCQYLNSTTMCVPHHMRVLHLGAGSDKGVAPGTAVLRRWLPLDAIIVDNDSVDYVSDADYSVTGDCSTLYLSDKFDLVISDMYDGKIKSCDGENVSKEGFFPYINGVITEKLALGGTVAIKVTEFSWNKKLYELIQKFEYWTMFCTSVNTSSSEAFLIGVHYLGDFASGAVIDGNTMHANYIFWRNSTIMTMSYNSVLDLSKFNCKHKATVVVNLKDSSISDVVLGLLKNGKLLVRNNDAICGFSNHLVNVNK</sequence>
<evidence type="ECO:0000250" key="1"/>
<evidence type="ECO:0000250" key="2">
    <source>
        <dbReference type="UniProtKB" id="P0C6V6"/>
    </source>
</evidence>
<evidence type="ECO:0000250" key="3">
    <source>
        <dbReference type="UniProtKB" id="P0C6X7"/>
    </source>
</evidence>
<evidence type="ECO:0000250" key="4">
    <source>
        <dbReference type="UniProtKB" id="P0C6X9"/>
    </source>
</evidence>
<evidence type="ECO:0000250" key="5">
    <source>
        <dbReference type="UniProtKB" id="P0DTC1"/>
    </source>
</evidence>
<evidence type="ECO:0000250" key="6">
    <source>
        <dbReference type="UniProtKB" id="P0DTD1"/>
    </source>
</evidence>
<evidence type="ECO:0000255" key="7"/>
<evidence type="ECO:0000255" key="8">
    <source>
        <dbReference type="PROSITE-ProRule" id="PRU00214"/>
    </source>
</evidence>
<evidence type="ECO:0000255" key="9">
    <source>
        <dbReference type="PROSITE-ProRule" id="PRU00444"/>
    </source>
</evidence>
<evidence type="ECO:0000255" key="10">
    <source>
        <dbReference type="PROSITE-ProRule" id="PRU00490"/>
    </source>
</evidence>
<evidence type="ECO:0000255" key="11">
    <source>
        <dbReference type="PROSITE-ProRule" id="PRU00772"/>
    </source>
</evidence>
<evidence type="ECO:0000255" key="12">
    <source>
        <dbReference type="PROSITE-ProRule" id="PRU00986"/>
    </source>
</evidence>
<evidence type="ECO:0000255" key="13">
    <source>
        <dbReference type="PROSITE-ProRule" id="PRU01291"/>
    </source>
</evidence>
<evidence type="ECO:0000255" key="14">
    <source>
        <dbReference type="PROSITE-ProRule" id="PRU01292"/>
    </source>
</evidence>
<evidence type="ECO:0000255" key="15">
    <source>
        <dbReference type="PROSITE-ProRule" id="PRU01293"/>
    </source>
</evidence>
<evidence type="ECO:0000255" key="16">
    <source>
        <dbReference type="PROSITE-ProRule" id="PRU01294"/>
    </source>
</evidence>
<evidence type="ECO:0000255" key="17">
    <source>
        <dbReference type="PROSITE-ProRule" id="PRU01295"/>
    </source>
</evidence>
<evidence type="ECO:0000255" key="18">
    <source>
        <dbReference type="PROSITE-ProRule" id="PRU01296"/>
    </source>
</evidence>
<evidence type="ECO:0000255" key="19">
    <source>
        <dbReference type="PROSITE-ProRule" id="PRU01297"/>
    </source>
</evidence>
<evidence type="ECO:0000255" key="20">
    <source>
        <dbReference type="PROSITE-ProRule" id="PRU01298"/>
    </source>
</evidence>
<evidence type="ECO:0000255" key="21">
    <source>
        <dbReference type="PROSITE-ProRule" id="PRU01299"/>
    </source>
</evidence>
<evidence type="ECO:0000255" key="22">
    <source>
        <dbReference type="PROSITE-ProRule" id="PRU01300"/>
    </source>
</evidence>
<evidence type="ECO:0000255" key="23">
    <source>
        <dbReference type="PROSITE-ProRule" id="PRU01303"/>
    </source>
</evidence>
<evidence type="ECO:0000255" key="24">
    <source>
        <dbReference type="PROSITE-ProRule" id="PRU01305"/>
    </source>
</evidence>
<evidence type="ECO:0000255" key="25">
    <source>
        <dbReference type="PROSITE-ProRule" id="PRU01306"/>
    </source>
</evidence>
<evidence type="ECO:0000255" key="26">
    <source>
        <dbReference type="PROSITE-ProRule" id="PRU01307"/>
    </source>
</evidence>
<evidence type="ECO:0000255" key="27">
    <source>
        <dbReference type="PROSITE-ProRule" id="PRU01333"/>
    </source>
</evidence>
<evidence type="ECO:0000255" key="28">
    <source>
        <dbReference type="PROSITE-ProRule" id="PRU01334"/>
    </source>
</evidence>
<evidence type="ECO:0000255" key="29">
    <source>
        <dbReference type="PROSITE-ProRule" id="PRU01335"/>
    </source>
</evidence>
<evidence type="ECO:0000255" key="30">
    <source>
        <dbReference type="PROSITE-ProRule" id="PRU01336"/>
    </source>
</evidence>
<evidence type="ECO:0000255" key="31">
    <source>
        <dbReference type="PROSITE-ProRule" id="PRU01337"/>
    </source>
</evidence>
<evidence type="ECO:0000255" key="32">
    <source>
        <dbReference type="PROSITE-ProRule" id="PRU01344"/>
    </source>
</evidence>
<evidence type="ECO:0000256" key="33">
    <source>
        <dbReference type="SAM" id="MobiDB-lite"/>
    </source>
</evidence>
<evidence type="ECO:0000269" key="34">
    <source>
    </source>
</evidence>
<evidence type="ECO:0000269" key="35">
    <source>
    </source>
</evidence>
<evidence type="ECO:0000269" key="36">
    <source>
    </source>
</evidence>
<evidence type="ECO:0000269" key="37">
    <source>
    </source>
</evidence>
<evidence type="ECO:0000269" key="38">
    <source>
    </source>
</evidence>
<evidence type="ECO:0000269" key="39">
    <source>
    </source>
</evidence>
<evidence type="ECO:0000269" key="40">
    <source>
    </source>
</evidence>
<evidence type="ECO:0000303" key="41">
    <source>
    </source>
</evidence>
<evidence type="ECO:0000305" key="42"/>
<evidence type="ECO:0007744" key="43">
    <source>
        <dbReference type="PDB" id="5HIY"/>
    </source>
</evidence>
<evidence type="ECO:0007744" key="44">
    <source>
        <dbReference type="PDB" id="5HIZ"/>
    </source>
</evidence>
<evidence type="ECO:0007829" key="45">
    <source>
        <dbReference type="PDB" id="5HIZ"/>
    </source>
</evidence>
<organismHost>
    <name type="scientific">Sus scrofa</name>
    <name type="common">Pig</name>
    <dbReference type="NCBI Taxonomy" id="9823"/>
</organismHost>
<organism>
    <name type="scientific">Porcine epidemic diarrhea virus (strain CV777)</name>
    <name type="common">PEDV</name>
    <dbReference type="NCBI Taxonomy" id="229032"/>
    <lineage>
        <taxon>Viruses</taxon>
        <taxon>Riboviria</taxon>
        <taxon>Orthornavirae</taxon>
        <taxon>Pisuviricota</taxon>
        <taxon>Pisoniviricetes</taxon>
        <taxon>Nidovirales</taxon>
        <taxon>Cornidovirineae</taxon>
        <taxon>Coronaviridae</taxon>
        <taxon>Orthocoronavirinae</taxon>
        <taxon>Alphacoronavirus</taxon>
        <taxon>Pedacovirus</taxon>
        <taxon>Porcine epidemic diarrhea virus</taxon>
    </lineage>
</organism>
<keyword id="KW-0002">3D-structure</keyword>
<keyword id="KW-1072">Activation of host autophagy by virus</keyword>
<keyword id="KW-0067">ATP-binding</keyword>
<keyword id="KW-1015">Disulfide bond</keyword>
<keyword id="KW-0238">DNA-binding</keyword>
<keyword id="KW-0255">Endonuclease</keyword>
<keyword id="KW-0269">Exonuclease</keyword>
<keyword id="KW-0347">Helicase</keyword>
<keyword id="KW-1035">Host cytoplasm</keyword>
<keyword id="KW-1038">Host endoplasmic reticulum</keyword>
<keyword id="KW-1043">Host membrane</keyword>
<keyword id="KW-1048">Host nucleus</keyword>
<keyword id="KW-0945">Host-virus interaction</keyword>
<keyword id="KW-0378">Hydrolase</keyword>
<keyword id="KW-1090">Inhibition of host innate immune response by virus</keyword>
<keyword id="KW-1092">Inhibition of host IRF3 by virus</keyword>
<keyword id="KW-1113">Inhibition of host RLR pathway by virus</keyword>
<keyword id="KW-1223">Inhibition of host TBK1 by virus</keyword>
<keyword id="KW-1225">Inhibition of host TLR pathway by virus</keyword>
<keyword id="KW-0456">Lyase</keyword>
<keyword id="KW-0472">Membrane</keyword>
<keyword id="KW-0479">Metal-binding</keyword>
<keyword id="KW-0489">Methyltransferase</keyword>
<keyword id="KW-1127">Modulation of host ubiquitin pathway by viral deubiquitinase</keyword>
<keyword id="KW-1130">Modulation of host ubiquitin pathway by virus</keyword>
<keyword id="KW-0540">Nuclease</keyword>
<keyword id="KW-0547">Nucleotide-binding</keyword>
<keyword id="KW-0548">Nucleotidyltransferase</keyword>
<keyword id="KW-0645">Protease</keyword>
<keyword id="KW-0677">Repeat</keyword>
<keyword id="KW-0688">Ribosomal frameshifting</keyword>
<keyword id="KW-0694">RNA-binding</keyword>
<keyword id="KW-0696">RNA-directed RNA polymerase</keyword>
<keyword id="KW-0788">Thiol protease</keyword>
<keyword id="KW-0808">Transferase</keyword>
<keyword id="KW-0812">Transmembrane</keyword>
<keyword id="KW-1133">Transmembrane helix</keyword>
<keyword id="KW-0833">Ubl conjugation pathway</keyword>
<keyword id="KW-0899">Viral immunoevasion</keyword>
<keyword id="KW-0693">Viral RNA replication</keyword>
<keyword id="KW-0862">Zinc</keyword>
<keyword id="KW-0863">Zinc-finger</keyword>
<dbReference type="EC" id="3.4.19.12" evidence="6"/>
<dbReference type="EC" id="3.4.22.-" evidence="35"/>
<dbReference type="EC" id="2.7.7.48"/>
<dbReference type="EC" id="2.7.7.50"/>
<dbReference type="EC" id="3.6.4.12"/>
<dbReference type="EC" id="3.6.4.13"/>
<dbReference type="EC" id="2.1.1.56" evidence="38"/>
<dbReference type="EC" id="3.1.13.-"/>
<dbReference type="EC" id="4.6.1.-" evidence="6"/>
<dbReference type="EC" id="2.1.1.57"/>
<dbReference type="EMBL" id="AF353511">
    <property type="protein sequence ID" value="AAK38661.1"/>
    <property type="status" value="ALT_SEQ"/>
    <property type="molecule type" value="Genomic_RNA"/>
</dbReference>
<dbReference type="RefSeq" id="NP_598309.2">
    <property type="nucleotide sequence ID" value="NC_003436.1"/>
</dbReference>
<dbReference type="PDB" id="5HIY">
    <property type="method" value="X-ray"/>
    <property type="resolution" value="3.00 A"/>
    <property type="chains" value="A/B/C=3858-3965"/>
</dbReference>
<dbReference type="PDB" id="5HIZ">
    <property type="method" value="X-ray"/>
    <property type="resolution" value="2.90 A"/>
    <property type="chains" value="A/B=3858-3965"/>
</dbReference>
<dbReference type="PDBsum" id="5HIY"/>
<dbReference type="PDBsum" id="5HIZ"/>
<dbReference type="SMR" id="P0C6Y4"/>
<dbReference type="IntAct" id="P0C6Y4">
    <property type="interactions" value="1"/>
</dbReference>
<dbReference type="BindingDB" id="P0C6Y4"/>
<dbReference type="MEROPS" id="C30.003"/>
<dbReference type="KEGG" id="vg:935181"/>
<dbReference type="BRENDA" id="3.4.22.B14">
    <property type="organism ID" value="8727"/>
</dbReference>
<dbReference type="BRENDA" id="3.4.22.B50">
    <property type="organism ID" value="8727"/>
</dbReference>
<dbReference type="SABIO-RK" id="P0C6Y4"/>
<dbReference type="Proteomes" id="UP000008159">
    <property type="component" value="Segment"/>
</dbReference>
<dbReference type="GO" id="GO:0044165">
    <property type="term" value="C:host cell endoplasmic reticulum"/>
    <property type="evidence" value="ECO:0007669"/>
    <property type="project" value="UniProtKB-SubCell"/>
</dbReference>
<dbReference type="GO" id="GO:0044172">
    <property type="term" value="C:host cell endoplasmic reticulum-Golgi intermediate compartment"/>
    <property type="evidence" value="ECO:0007669"/>
    <property type="project" value="UniProtKB-SubCell"/>
</dbReference>
<dbReference type="GO" id="GO:0033644">
    <property type="term" value="C:host cell membrane"/>
    <property type="evidence" value="ECO:0007669"/>
    <property type="project" value="UniProtKB-SubCell"/>
</dbReference>
<dbReference type="GO" id="GO:0042025">
    <property type="term" value="C:host cell nucleus"/>
    <property type="evidence" value="ECO:0007669"/>
    <property type="project" value="UniProtKB-SubCell"/>
</dbReference>
<dbReference type="GO" id="GO:0044220">
    <property type="term" value="C:host cell perinuclear region of cytoplasm"/>
    <property type="evidence" value="ECO:0007669"/>
    <property type="project" value="UniProtKB-SubCell"/>
</dbReference>
<dbReference type="GO" id="GO:0016020">
    <property type="term" value="C:membrane"/>
    <property type="evidence" value="ECO:0007669"/>
    <property type="project" value="UniProtKB-KW"/>
</dbReference>
<dbReference type="GO" id="GO:0000175">
    <property type="term" value="F:3'-5'-RNA exonuclease activity"/>
    <property type="evidence" value="ECO:0007669"/>
    <property type="project" value="InterPro"/>
</dbReference>
<dbReference type="GO" id="GO:0043139">
    <property type="term" value="F:5'-3' DNA helicase activity"/>
    <property type="evidence" value="ECO:0007669"/>
    <property type="project" value="TreeGrafter"/>
</dbReference>
<dbReference type="GO" id="GO:0005524">
    <property type="term" value="F:ATP binding"/>
    <property type="evidence" value="ECO:0007669"/>
    <property type="project" value="UniProtKB-KW"/>
</dbReference>
<dbReference type="GO" id="GO:0016887">
    <property type="term" value="F:ATP hydrolysis activity"/>
    <property type="evidence" value="ECO:0007669"/>
    <property type="project" value="RHEA"/>
</dbReference>
<dbReference type="GO" id="GO:0004843">
    <property type="term" value="F:cysteine-type deubiquitinase activity"/>
    <property type="evidence" value="ECO:0007669"/>
    <property type="project" value="UniProtKB-EC"/>
</dbReference>
<dbReference type="GO" id="GO:0004197">
    <property type="term" value="F:cysteine-type endopeptidase activity"/>
    <property type="evidence" value="ECO:0007669"/>
    <property type="project" value="InterPro"/>
</dbReference>
<dbReference type="GO" id="GO:0003677">
    <property type="term" value="F:DNA binding"/>
    <property type="evidence" value="ECO:0007669"/>
    <property type="project" value="UniProtKB-KW"/>
</dbReference>
<dbReference type="GO" id="GO:0004519">
    <property type="term" value="F:endonuclease activity"/>
    <property type="evidence" value="ECO:0007669"/>
    <property type="project" value="UniProtKB-KW"/>
</dbReference>
<dbReference type="GO" id="GO:0016829">
    <property type="term" value="F:lyase activity"/>
    <property type="evidence" value="ECO:0007669"/>
    <property type="project" value="UniProtKB-KW"/>
</dbReference>
<dbReference type="GO" id="GO:0004483">
    <property type="term" value="F:mRNA (nucleoside-2'-O-)-methyltransferase activity"/>
    <property type="evidence" value="ECO:0007669"/>
    <property type="project" value="InterPro"/>
</dbReference>
<dbReference type="GO" id="GO:0004482">
    <property type="term" value="F:mRNA 5'-cap (guanine-N7-)-methyltransferase activity"/>
    <property type="evidence" value="ECO:0007669"/>
    <property type="project" value="InterPro"/>
</dbReference>
<dbReference type="GO" id="GO:0008242">
    <property type="term" value="F:omega peptidase activity"/>
    <property type="evidence" value="ECO:0007669"/>
    <property type="project" value="InterPro"/>
</dbReference>
<dbReference type="GO" id="GO:0003723">
    <property type="term" value="F:RNA binding"/>
    <property type="evidence" value="ECO:0007669"/>
    <property type="project" value="UniProtKB-KW"/>
</dbReference>
<dbReference type="GO" id="GO:0003724">
    <property type="term" value="F:RNA helicase activity"/>
    <property type="evidence" value="ECO:0007669"/>
    <property type="project" value="UniProtKB-EC"/>
</dbReference>
<dbReference type="GO" id="GO:0003968">
    <property type="term" value="F:RNA-directed RNA polymerase activity"/>
    <property type="evidence" value="ECO:0007669"/>
    <property type="project" value="UniProtKB-KW"/>
</dbReference>
<dbReference type="GO" id="GO:0008270">
    <property type="term" value="F:zinc ion binding"/>
    <property type="evidence" value="ECO:0007669"/>
    <property type="project" value="UniProtKB-KW"/>
</dbReference>
<dbReference type="GO" id="GO:0006351">
    <property type="term" value="P:DNA-templated transcription"/>
    <property type="evidence" value="ECO:0007669"/>
    <property type="project" value="InterPro"/>
</dbReference>
<dbReference type="GO" id="GO:0006508">
    <property type="term" value="P:proteolysis"/>
    <property type="evidence" value="ECO:0007669"/>
    <property type="project" value="UniProtKB-KW"/>
</dbReference>
<dbReference type="GO" id="GO:0010506">
    <property type="term" value="P:regulation of autophagy"/>
    <property type="evidence" value="ECO:0007669"/>
    <property type="project" value="InterPro"/>
</dbReference>
<dbReference type="GO" id="GO:0039520">
    <property type="term" value="P:symbiont-mediated activation of host autophagy"/>
    <property type="evidence" value="ECO:0007669"/>
    <property type="project" value="UniProtKB-KW"/>
</dbReference>
<dbReference type="GO" id="GO:0039648">
    <property type="term" value="P:symbiont-mediated perturbation of host ubiquitin-like protein modification"/>
    <property type="evidence" value="ECO:0007669"/>
    <property type="project" value="UniProtKB-KW"/>
</dbReference>
<dbReference type="GO" id="GO:0039548">
    <property type="term" value="P:symbiont-mediated suppression of host cytoplasmic pattern recognition receptor signaling pathway via inhibition of IRF3 activity"/>
    <property type="evidence" value="ECO:0007669"/>
    <property type="project" value="UniProtKB-KW"/>
</dbReference>
<dbReference type="GO" id="GO:0039723">
    <property type="term" value="P:symbiont-mediated suppression of host cytoplasmic pattern recognition receptor signaling pathway via inhibition of TBK1 activity"/>
    <property type="evidence" value="ECO:0007669"/>
    <property type="project" value="UniProtKB-KW"/>
</dbReference>
<dbReference type="GO" id="GO:0039722">
    <property type="term" value="P:symbiont-mediated suppression of host toll-like receptor signaling pathway"/>
    <property type="evidence" value="ECO:0007669"/>
    <property type="project" value="UniProtKB-KW"/>
</dbReference>
<dbReference type="GO" id="GO:0019079">
    <property type="term" value="P:viral genome replication"/>
    <property type="evidence" value="ECO:0007669"/>
    <property type="project" value="InterPro"/>
</dbReference>
<dbReference type="GO" id="GO:0019082">
    <property type="term" value="P:viral protein processing"/>
    <property type="evidence" value="ECO:0007669"/>
    <property type="project" value="InterPro"/>
</dbReference>
<dbReference type="GO" id="GO:0075523">
    <property type="term" value="P:viral translational frameshifting"/>
    <property type="evidence" value="ECO:0007669"/>
    <property type="project" value="UniProtKB-KW"/>
</dbReference>
<dbReference type="CDD" id="cd21409">
    <property type="entry name" value="1B_cv_Nsp13-like"/>
    <property type="match status" value="1"/>
</dbReference>
<dbReference type="CDD" id="cd21901">
    <property type="entry name" value="alpha_betaCoV_Nsp10"/>
    <property type="match status" value="1"/>
</dbReference>
<dbReference type="CDD" id="cd21558">
    <property type="entry name" value="alphaCoV-Nsp6"/>
    <property type="match status" value="1"/>
</dbReference>
<dbReference type="CDD" id="cd21723">
    <property type="entry name" value="alphaCoV_Nsp13-helicase"/>
    <property type="match status" value="1"/>
</dbReference>
<dbReference type="CDD" id="cd21660">
    <property type="entry name" value="alphaCoV_Nsp14"/>
    <property type="match status" value="1"/>
</dbReference>
<dbReference type="CDD" id="cd21514">
    <property type="entry name" value="alphaCoV_Nsp2_HCoV-229E-like"/>
    <property type="match status" value="1"/>
</dbReference>
<dbReference type="CDD" id="cd21665">
    <property type="entry name" value="alphaCoV_Nsp5_Mpro"/>
    <property type="match status" value="1"/>
</dbReference>
<dbReference type="CDD" id="cd21826">
    <property type="entry name" value="alphaCoV_Nsp7"/>
    <property type="match status" value="1"/>
</dbReference>
<dbReference type="CDD" id="cd21830">
    <property type="entry name" value="alphaCoV_Nsp8"/>
    <property type="match status" value="1"/>
</dbReference>
<dbReference type="CDD" id="cd21897">
    <property type="entry name" value="alphaCoV_Nsp9"/>
    <property type="match status" value="1"/>
</dbReference>
<dbReference type="CDD" id="cd21731">
    <property type="entry name" value="alphaCoV_PLPro"/>
    <property type="match status" value="1"/>
</dbReference>
<dbReference type="CDD" id="cd21588">
    <property type="entry name" value="alphaCoV_RdRp"/>
    <property type="match status" value="1"/>
</dbReference>
<dbReference type="CDD" id="cd23527">
    <property type="entry name" value="capping_2-OMTase_alphaCoV_Nsp16"/>
    <property type="match status" value="1"/>
</dbReference>
<dbReference type="CDD" id="cd21473">
    <property type="entry name" value="cv_Nsp4_TM"/>
    <property type="match status" value="1"/>
</dbReference>
<dbReference type="CDD" id="cd21167">
    <property type="entry name" value="M_alpha_beta_cv_Nsp15-like"/>
    <property type="match status" value="1"/>
</dbReference>
<dbReference type="CDD" id="cd21557">
    <property type="entry name" value="Macro_X_Nsp3-like"/>
    <property type="match status" value="1"/>
</dbReference>
<dbReference type="CDD" id="cd21161">
    <property type="entry name" value="NendoU_cv_Nsp15-like"/>
    <property type="match status" value="1"/>
</dbReference>
<dbReference type="CDD" id="cd21171">
    <property type="entry name" value="NTD_alpha_betaCoV_Nsp15-like"/>
    <property type="match status" value="1"/>
</dbReference>
<dbReference type="CDD" id="cd21875">
    <property type="entry name" value="PEDV-like_alphaCoV_Nsp1"/>
    <property type="match status" value="1"/>
</dbReference>
<dbReference type="CDD" id="cd21689">
    <property type="entry name" value="stalk_CoV_Nsp13-like"/>
    <property type="match status" value="1"/>
</dbReference>
<dbReference type="CDD" id="cd21712">
    <property type="entry name" value="TM_Y_alphaCoV_Nsp3_C"/>
    <property type="match status" value="1"/>
</dbReference>
<dbReference type="CDD" id="cd21401">
    <property type="entry name" value="ZBD_cv_Nsp13-like"/>
    <property type="match status" value="1"/>
</dbReference>
<dbReference type="FunFam" id="3.40.50.300:FF:001139">
    <property type="entry name" value="Orf1ab polyprotein"/>
    <property type="match status" value="1"/>
</dbReference>
<dbReference type="Gene3D" id="1.10.8.1190">
    <property type="match status" value="2"/>
</dbReference>
<dbReference type="Gene3D" id="3.40.50.11580">
    <property type="match status" value="1"/>
</dbReference>
<dbReference type="Gene3D" id="6.10.140.2090">
    <property type="match status" value="1"/>
</dbReference>
<dbReference type="Gene3D" id="1.10.150.420">
    <property type="entry name" value="Coronavirus nonstructural protein 4 C-terminus"/>
    <property type="match status" value="1"/>
</dbReference>
<dbReference type="Gene3D" id="3.40.220.10">
    <property type="entry name" value="Leucine Aminopeptidase, subunit E, domain 1"/>
    <property type="match status" value="1"/>
</dbReference>
<dbReference type="Gene3D" id="1.10.1840.10">
    <property type="entry name" value="main proteinase (3clpro) structure, domain 3"/>
    <property type="match status" value="1"/>
</dbReference>
<dbReference type="Gene3D" id="3.30.160.820">
    <property type="entry name" value="Nsp15 N-terminal domain-like"/>
    <property type="match status" value="1"/>
</dbReference>
<dbReference type="Gene3D" id="1.10.8.370">
    <property type="entry name" value="nsp7 replicase"/>
    <property type="match status" value="1"/>
</dbReference>
<dbReference type="Gene3D" id="3.30.70.3540">
    <property type="entry name" value="Nsp8 replicase, head domain"/>
    <property type="match status" value="1"/>
</dbReference>
<dbReference type="Gene3D" id="3.40.50.300">
    <property type="entry name" value="P-loop containing nucleotide triphosphate hydrolases"/>
    <property type="match status" value="2"/>
</dbReference>
<dbReference type="Gene3D" id="2.40.10.250">
    <property type="entry name" value="Replicase NSP9"/>
    <property type="match status" value="1"/>
</dbReference>
<dbReference type="Gene3D" id="2.40.10.10">
    <property type="entry name" value="Trypsin-like serine proteases"/>
    <property type="match status" value="2"/>
</dbReference>
<dbReference type="Gene3D" id="3.40.50.150">
    <property type="entry name" value="Vaccinia Virus protein VP39"/>
    <property type="match status" value="1"/>
</dbReference>
<dbReference type="InterPro" id="IPR027351">
    <property type="entry name" value="(+)RNA_virus_helicase_core_dom"/>
</dbReference>
<dbReference type="InterPro" id="IPR046443">
    <property type="entry name" value="a/bCoV_NSP1_glob"/>
</dbReference>
<dbReference type="InterPro" id="IPR046440">
    <property type="entry name" value="AV_NSP11N_COV_NSP15M"/>
</dbReference>
<dbReference type="InterPro" id="IPR050534">
    <property type="entry name" value="Coronavir_polyprotein_1ab"/>
</dbReference>
<dbReference type="InterPro" id="IPR043608">
    <property type="entry name" value="CoV_NSP15_M"/>
</dbReference>
<dbReference type="InterPro" id="IPR043606">
    <property type="entry name" value="CoV_NSP15_N"/>
</dbReference>
<dbReference type="InterPro" id="IPR043613">
    <property type="entry name" value="CoV_NSP2_C"/>
</dbReference>
<dbReference type="InterPro" id="IPR047573">
    <property type="entry name" value="CoV_NSP2_M"/>
</dbReference>
<dbReference type="InterPro" id="IPR049894">
    <property type="entry name" value="COV_NSP3_3ECTO"/>
</dbReference>
<dbReference type="InterPro" id="IPR043611">
    <property type="entry name" value="CoV_NSP3_C"/>
</dbReference>
<dbReference type="InterPro" id="IPR047566">
    <property type="entry name" value="CoV_NSP3_Y"/>
</dbReference>
<dbReference type="InterPro" id="IPR032505">
    <property type="entry name" value="CoV_NSP4_C"/>
</dbReference>
<dbReference type="InterPro" id="IPR043612">
    <property type="entry name" value="CoV_NSP4_N"/>
</dbReference>
<dbReference type="InterPro" id="IPR043502">
    <property type="entry name" value="DNA/RNA_pol_sf"/>
</dbReference>
<dbReference type="InterPro" id="IPR041679">
    <property type="entry name" value="DNA2/NAM7-like_C"/>
</dbReference>
<dbReference type="InterPro" id="IPR037227">
    <property type="entry name" value="EndoU-like"/>
</dbReference>
<dbReference type="InterPro" id="IPR002589">
    <property type="entry name" value="Macro_dom"/>
</dbReference>
<dbReference type="InterPro" id="IPR043472">
    <property type="entry name" value="Macro_dom-like"/>
</dbReference>
<dbReference type="InterPro" id="IPR044371">
    <property type="entry name" value="Macro_X_NSP3-like"/>
</dbReference>
<dbReference type="InterPro" id="IPR046435">
    <property type="entry name" value="N7_MTase_CoV"/>
</dbReference>
<dbReference type="InterPro" id="IPR043609">
    <property type="entry name" value="NendoU_nidovirus"/>
</dbReference>
<dbReference type="InterPro" id="IPR044863">
    <property type="entry name" value="NIRAN"/>
</dbReference>
<dbReference type="InterPro" id="IPR046438">
    <property type="entry name" value="NIV_2_O_MTASE"/>
</dbReference>
<dbReference type="InterPro" id="IPR046436">
    <property type="entry name" value="NIV_EXON"/>
</dbReference>
<dbReference type="InterPro" id="IPR036333">
    <property type="entry name" value="NSP10_sf_CoV"/>
</dbReference>
<dbReference type="InterPro" id="IPR047570">
    <property type="entry name" value="NSP12_IF_CoV"/>
</dbReference>
<dbReference type="InterPro" id="IPR044343">
    <property type="entry name" value="NSP13_1B_dom_CoV"/>
</dbReference>
<dbReference type="InterPro" id="IPR047912">
    <property type="entry name" value="Nsp13_helicase_alphaCoV"/>
</dbReference>
<dbReference type="InterPro" id="IPR048673">
    <property type="entry name" value="NSP13_stalk_CoV"/>
</dbReference>
<dbReference type="InterPro" id="IPR048672">
    <property type="entry name" value="NSP13_ZBD_CoV"/>
</dbReference>
<dbReference type="InterPro" id="IPR027352">
    <property type="entry name" value="NSP13_ZBD_CoV-like"/>
</dbReference>
<dbReference type="InterPro" id="IPR044313">
    <property type="entry name" value="NSP14_alphaCoV"/>
</dbReference>
<dbReference type="InterPro" id="IPR009466">
    <property type="entry name" value="NSP14_CoV"/>
</dbReference>
<dbReference type="InterPro" id="IPR044330">
    <property type="entry name" value="NSP15_alpha_betaCoV_N"/>
</dbReference>
<dbReference type="InterPro" id="IPR044322">
    <property type="entry name" value="NSP15_M_alpha_beta_CoV"/>
</dbReference>
<dbReference type="InterPro" id="IPR043174">
    <property type="entry name" value="NSP15_middle_sf"/>
</dbReference>
<dbReference type="InterPro" id="IPR042515">
    <property type="entry name" value="NSP15_N_CoV"/>
</dbReference>
<dbReference type="InterPro" id="IPR044401">
    <property type="entry name" value="NSP15_NendoU_CoV"/>
</dbReference>
<dbReference type="InterPro" id="IPR009461">
    <property type="entry name" value="NSP16_CoV-like"/>
</dbReference>
<dbReference type="InterPro" id="IPR044385">
    <property type="entry name" value="NSP2_HCoV-229E-like"/>
</dbReference>
<dbReference type="InterPro" id="IPR043615">
    <property type="entry name" value="NSP2_N_CoV"/>
</dbReference>
<dbReference type="InterPro" id="IPR044357">
    <property type="entry name" value="NSP3_Ubl1_dom_CoV"/>
</dbReference>
<dbReference type="InterPro" id="IPR044353">
    <property type="entry name" value="Nsp3_Ubl2_dom_CoV"/>
</dbReference>
<dbReference type="InterPro" id="IPR038123">
    <property type="entry name" value="NSP4_C_sf_CoV"/>
</dbReference>
<dbReference type="InterPro" id="IPR044309">
    <property type="entry name" value="NSP5_Mpro_alphaCoV"/>
</dbReference>
<dbReference type="InterPro" id="IPR044369">
    <property type="entry name" value="NSP6_alphaCoV"/>
</dbReference>
<dbReference type="InterPro" id="IPR043610">
    <property type="entry name" value="NSP6_CoV"/>
</dbReference>
<dbReference type="InterPro" id="IPR014828">
    <property type="entry name" value="NSP7_CoV"/>
</dbReference>
<dbReference type="InterPro" id="IPR037204">
    <property type="entry name" value="NSP7_sf_CoV"/>
</dbReference>
<dbReference type="InterPro" id="IPR014829">
    <property type="entry name" value="NSP8_CoV"/>
</dbReference>
<dbReference type="InterPro" id="IPR037230">
    <property type="entry name" value="NSP8_sf_CoV"/>
</dbReference>
<dbReference type="InterPro" id="IPR014822">
    <property type="entry name" value="NSP9_CoV"/>
</dbReference>
<dbReference type="InterPro" id="IPR036499">
    <property type="entry name" value="NSP9_sf_CoV"/>
</dbReference>
<dbReference type="InterPro" id="IPR027417">
    <property type="entry name" value="P-loop_NTPase"/>
</dbReference>
<dbReference type="InterPro" id="IPR011050">
    <property type="entry name" value="Pectin_lyase_fold/virulence"/>
</dbReference>
<dbReference type="InterPro" id="IPR013016">
    <property type="entry name" value="Peptidase_C16_CoV"/>
</dbReference>
<dbReference type="InterPro" id="IPR008740">
    <property type="entry name" value="Peptidase_C30_CoV"/>
</dbReference>
<dbReference type="InterPro" id="IPR043477">
    <property type="entry name" value="Peptidase_C30_dom3_CoV"/>
</dbReference>
<dbReference type="InterPro" id="IPR009003">
    <property type="entry name" value="Peptidase_S1_PA"/>
</dbReference>
<dbReference type="InterPro" id="IPR043504">
    <property type="entry name" value="Peptidase_S1_PA_chymotrypsin"/>
</dbReference>
<dbReference type="InterPro" id="IPR043178">
    <property type="entry name" value="PLpro_thumb_sf_CoV"/>
</dbReference>
<dbReference type="InterPro" id="IPR044356">
    <property type="entry name" value="RdRp_alphaCoV"/>
</dbReference>
<dbReference type="InterPro" id="IPR046441">
    <property type="entry name" value="RdRp_CoV"/>
</dbReference>
<dbReference type="InterPro" id="IPR009469">
    <property type="entry name" value="RdRp_N_CoV"/>
</dbReference>
<dbReference type="InterPro" id="IPR001205">
    <property type="entry name" value="RNA-dir_pol_C"/>
</dbReference>
<dbReference type="InterPro" id="IPR018995">
    <property type="entry name" value="RNA_synth_NSP10_CoV"/>
</dbReference>
<dbReference type="InterPro" id="IPR029063">
    <property type="entry name" value="SAM-dependent_MTases_sf"/>
</dbReference>
<dbReference type="PANTHER" id="PTHR43788">
    <property type="entry name" value="DNA2/NAM7 HELICASE FAMILY MEMBER"/>
    <property type="match status" value="1"/>
</dbReference>
<dbReference type="PANTHER" id="PTHR43788:SF16">
    <property type="entry name" value="HELICASE WITH ZINC FINGER 2"/>
    <property type="match status" value="1"/>
</dbReference>
<dbReference type="Pfam" id="PF13087">
    <property type="entry name" value="AAA_12"/>
    <property type="match status" value="1"/>
</dbReference>
<dbReference type="Pfam" id="PF13604">
    <property type="entry name" value="AAA_30"/>
    <property type="match status" value="1"/>
</dbReference>
<dbReference type="Pfam" id="PF06471">
    <property type="entry name" value="CoV_ExoN"/>
    <property type="match status" value="1"/>
</dbReference>
<dbReference type="Pfam" id="PF06460">
    <property type="entry name" value="CoV_Methyltr_2"/>
    <property type="match status" value="1"/>
</dbReference>
<dbReference type="Pfam" id="PF09401">
    <property type="entry name" value="CoV_NSP10"/>
    <property type="match status" value="1"/>
</dbReference>
<dbReference type="Pfam" id="PF20631">
    <property type="entry name" value="CoV_NSP13_1B"/>
    <property type="match status" value="1"/>
</dbReference>
<dbReference type="Pfam" id="PF20633">
    <property type="entry name" value="CoV_NSP13_stalk"/>
    <property type="match status" value="1"/>
</dbReference>
<dbReference type="Pfam" id="PF20632">
    <property type="entry name" value="CoV_NSP13_ZBD"/>
    <property type="match status" value="1"/>
</dbReference>
<dbReference type="Pfam" id="PF19215">
    <property type="entry name" value="CoV_NSP15_C"/>
    <property type="match status" value="1"/>
</dbReference>
<dbReference type="Pfam" id="PF19216">
    <property type="entry name" value="CoV_NSP15_M"/>
    <property type="match status" value="1"/>
</dbReference>
<dbReference type="Pfam" id="PF19219">
    <property type="entry name" value="CoV_NSP15_N"/>
    <property type="match status" value="1"/>
</dbReference>
<dbReference type="Pfam" id="PF19212">
    <property type="entry name" value="CoV_NSP2_C"/>
    <property type="match status" value="2"/>
</dbReference>
<dbReference type="Pfam" id="PF19211">
    <property type="entry name" value="CoV_NSP2_N"/>
    <property type="match status" value="1"/>
</dbReference>
<dbReference type="Pfam" id="PF19218">
    <property type="entry name" value="CoV_NSP3_C"/>
    <property type="match status" value="1"/>
</dbReference>
<dbReference type="Pfam" id="PF16348">
    <property type="entry name" value="CoV_NSP4_C"/>
    <property type="match status" value="1"/>
</dbReference>
<dbReference type="Pfam" id="PF19217">
    <property type="entry name" value="CoV_NSP4_N"/>
    <property type="match status" value="1"/>
</dbReference>
<dbReference type="Pfam" id="PF19213">
    <property type="entry name" value="CoV_NSP6"/>
    <property type="match status" value="1"/>
</dbReference>
<dbReference type="Pfam" id="PF08716">
    <property type="entry name" value="CoV_NSP7"/>
    <property type="match status" value="1"/>
</dbReference>
<dbReference type="Pfam" id="PF08717">
    <property type="entry name" value="CoV_NSP8"/>
    <property type="match status" value="1"/>
</dbReference>
<dbReference type="Pfam" id="PF08710">
    <property type="entry name" value="CoV_NSP9"/>
    <property type="match status" value="1"/>
</dbReference>
<dbReference type="Pfam" id="PF08715">
    <property type="entry name" value="CoV_peptidase"/>
    <property type="match status" value="1"/>
</dbReference>
<dbReference type="Pfam" id="PF06478">
    <property type="entry name" value="CoV_RPol_N"/>
    <property type="match status" value="1"/>
</dbReference>
<dbReference type="Pfam" id="PF01661">
    <property type="entry name" value="Macro"/>
    <property type="match status" value="1"/>
</dbReference>
<dbReference type="Pfam" id="PF05409">
    <property type="entry name" value="Peptidase_C30"/>
    <property type="match status" value="1"/>
</dbReference>
<dbReference type="Pfam" id="PF00680">
    <property type="entry name" value="RdRP_1"/>
    <property type="match status" value="1"/>
</dbReference>
<dbReference type="SMART" id="SM00506">
    <property type="entry name" value="A1pp"/>
    <property type="match status" value="1"/>
</dbReference>
<dbReference type="SUPFAM" id="SSF144246">
    <property type="entry name" value="Coronavirus NSP10-like"/>
    <property type="match status" value="1"/>
</dbReference>
<dbReference type="SUPFAM" id="SSF140367">
    <property type="entry name" value="Coronavirus NSP7-like"/>
    <property type="match status" value="1"/>
</dbReference>
<dbReference type="SUPFAM" id="SSF143076">
    <property type="entry name" value="Coronavirus NSP8-like"/>
    <property type="match status" value="1"/>
</dbReference>
<dbReference type="SUPFAM" id="SSF56672">
    <property type="entry name" value="DNA/RNA polymerases"/>
    <property type="match status" value="1"/>
</dbReference>
<dbReference type="SUPFAM" id="SSF142877">
    <property type="entry name" value="EndoU-like"/>
    <property type="match status" value="1"/>
</dbReference>
<dbReference type="SUPFAM" id="SSF52949">
    <property type="entry name" value="Macro domain-like"/>
    <property type="match status" value="1"/>
</dbReference>
<dbReference type="SUPFAM" id="SSF52540">
    <property type="entry name" value="P-loop containing nucleoside triphosphate hydrolases"/>
    <property type="match status" value="1"/>
</dbReference>
<dbReference type="SUPFAM" id="SSF51126">
    <property type="entry name" value="Pectin lyase-like"/>
    <property type="match status" value="1"/>
</dbReference>
<dbReference type="SUPFAM" id="SSF101816">
    <property type="entry name" value="Replicase NSP9"/>
    <property type="match status" value="1"/>
</dbReference>
<dbReference type="SUPFAM" id="SSF53335">
    <property type="entry name" value="S-adenosyl-L-methionine-dependent methyltransferases"/>
    <property type="match status" value="1"/>
</dbReference>
<dbReference type="SUPFAM" id="SSF50494">
    <property type="entry name" value="Trypsin-like serine proteases"/>
    <property type="match status" value="1"/>
</dbReference>
<dbReference type="PROSITE" id="PS51961">
    <property type="entry name" value="AV_NSP11N_COV_NSP15M"/>
    <property type="match status" value="1"/>
</dbReference>
<dbReference type="PROSITE" id="PS51993">
    <property type="entry name" value="COV_3ECTO"/>
    <property type="match status" value="1"/>
</dbReference>
<dbReference type="PROSITE" id="PS51952">
    <property type="entry name" value="COV_EXON_MTASE_COACT"/>
    <property type="match status" value="1"/>
</dbReference>
<dbReference type="PROSITE" id="PS51954">
    <property type="entry name" value="COV_N7_MTASE"/>
    <property type="match status" value="1"/>
</dbReference>
<dbReference type="PROSITE" id="PS51962">
    <property type="entry name" value="COV_NSP1"/>
    <property type="match status" value="1"/>
</dbReference>
<dbReference type="PROSITE" id="PS52000">
    <property type="entry name" value="COV_NSP12_IF"/>
    <property type="match status" value="1"/>
</dbReference>
<dbReference type="PROSITE" id="PS51948">
    <property type="entry name" value="COV_NSP12_RDRP"/>
    <property type="match status" value="1"/>
</dbReference>
<dbReference type="PROSITE" id="PS51960">
    <property type="entry name" value="COV_NSP15_NTD"/>
    <property type="match status" value="1"/>
</dbReference>
<dbReference type="PROSITE" id="PS51991">
    <property type="entry name" value="COV_NSP2_C"/>
    <property type="match status" value="1"/>
</dbReference>
<dbReference type="PROSITE" id="PS51990">
    <property type="entry name" value="COV_NSP2_M"/>
    <property type="match status" value="1"/>
</dbReference>
<dbReference type="PROSITE" id="PS51989">
    <property type="entry name" value="COV_NSP2_N"/>
    <property type="match status" value="1"/>
</dbReference>
<dbReference type="PROSITE" id="PS51992">
    <property type="entry name" value="COV_NSP3_Y"/>
    <property type="match status" value="1"/>
</dbReference>
<dbReference type="PROSITE" id="PS51943">
    <property type="entry name" value="COV_NSP3A_UBL"/>
    <property type="match status" value="1"/>
</dbReference>
<dbReference type="PROSITE" id="PS51944">
    <property type="entry name" value="COV_NSP3D_UBL"/>
    <property type="match status" value="1"/>
</dbReference>
<dbReference type="PROSITE" id="PS51946">
    <property type="entry name" value="COV_NSP4C"/>
    <property type="match status" value="1"/>
</dbReference>
<dbReference type="PROSITE" id="PS51949">
    <property type="entry name" value="COV_NSP7"/>
    <property type="match status" value="1"/>
</dbReference>
<dbReference type="PROSITE" id="PS51950">
    <property type="entry name" value="COV_NSP8"/>
    <property type="match status" value="1"/>
</dbReference>
<dbReference type="PROSITE" id="PS51951">
    <property type="entry name" value="COV_NSP9_SSRNA_BD"/>
    <property type="match status" value="1"/>
</dbReference>
<dbReference type="PROSITE" id="PS51653">
    <property type="entry name" value="CV_ZBD"/>
    <property type="match status" value="1"/>
</dbReference>
<dbReference type="PROSITE" id="PS51442">
    <property type="entry name" value="M_PRO"/>
    <property type="match status" value="1"/>
</dbReference>
<dbReference type="PROSITE" id="PS51154">
    <property type="entry name" value="MACRO"/>
    <property type="match status" value="1"/>
</dbReference>
<dbReference type="PROSITE" id="PS51958">
    <property type="entry name" value="NENDOU"/>
    <property type="match status" value="1"/>
</dbReference>
<dbReference type="PROSITE" id="PS51947">
    <property type="entry name" value="NIRAN"/>
    <property type="match status" value="1"/>
</dbReference>
<dbReference type="PROSITE" id="PS51955">
    <property type="entry name" value="NIV_2_O_MTASE"/>
    <property type="match status" value="1"/>
</dbReference>
<dbReference type="PROSITE" id="PS51953">
    <property type="entry name" value="NIV_EXON"/>
    <property type="match status" value="1"/>
</dbReference>
<dbReference type="PROSITE" id="PS51124">
    <property type="entry name" value="PEPTIDASE_C16"/>
    <property type="match status" value="2"/>
</dbReference>
<dbReference type="PROSITE" id="PS51657">
    <property type="entry name" value="PSRV_HELICASE"/>
    <property type="match status" value="1"/>
</dbReference>
<reference key="1">
    <citation type="journal article" date="1998" name="Adv. Exp. Med. Biol.">
        <title>Further analysis of the genome of porcine epidemic diarrhea virus.</title>
        <authorList>
            <person name="Bridgen A."/>
            <person name="Kocherhans R."/>
            <person name="Tobler K."/>
            <person name="Carvajal A."/>
            <person name="Ackermann M."/>
        </authorList>
    </citation>
    <scope>NUCLEOTIDE SEQUENCE [GENOMIC RNA]</scope>
</reference>
<reference key="2">
    <citation type="journal article" date="2001" name="Virus Genes">
        <title>Completion of the porcine epidemic diarrhoea coronavirus (PEDV) genome sequence.</title>
        <authorList>
            <person name="Kocherhans R."/>
            <person name="Bridgen A."/>
            <person name="Ackermann M."/>
            <person name="Tobler K."/>
        </authorList>
    </citation>
    <scope>NUCLEOTIDE SEQUENCE [GENOMIC RNA]</scope>
</reference>
<reference key="3">
    <citation type="journal article" date="2016" name="Virology">
        <title>Suppression of type I interferon production by porcine epidemic diarrhea virus and degradation of CREB-binding protein by nsp1.</title>
        <authorList>
            <person name="Zhang Q."/>
            <person name="Shi K."/>
            <person name="Yoo D."/>
        </authorList>
    </citation>
    <scope>FUNCTION (NON-STRUCTURAL PROTEIN 1)</scope>
    <scope>SUBCELLULAR LOCATION (NON-STRUCTURAL PROTEIN 1)</scope>
    <source>
        <strain>USA/Colorado/2013</strain>
    </source>
</reference>
<reference key="4">
    <citation type="journal article" date="2016" name="Sci. Rep.">
        <title>X-Ray Structure and Inhibition of 3C-like Protease from Porcine Epidemic Diarrhea Virus.</title>
        <authorList>
            <person name="St John S.E."/>
            <person name="Anson B.J."/>
            <person name="Mesecar A.D."/>
        </authorList>
    </citation>
    <scope>ACTIVITY REGULATION (3C-LIKE PROTEINASE NSP5)</scope>
    <scope>SUBUNIT (3C-LIKE PROTEINASE NSP5)</scope>
    <scope>ACTIVE SITE (3C-LIKE PROTEINASE NSP5)</scope>
    <scope>CATALYTIC ACTIVITY (3C-LIKE PROTEINASE NSP5)</scope>
</reference>
<reference key="5">
    <citation type="journal article" date="2017" name="Virology">
        <title>Inhibition of NF-kappaB activity by the porcine epidemic diarrhea virus nonstructural protein 1 for innate immune evasion.</title>
        <authorList>
            <person name="Zhang Q."/>
            <person name="Ma J."/>
            <person name="Yoo D."/>
        </authorList>
    </citation>
    <scope>FUNCTION (NON-STRUCTURAL PROTEIN 1)</scope>
    <source>
        <strain>USA/Colorado/2013</strain>
    </source>
</reference>
<reference key="6">
    <citation type="journal article" date="2020" name="J. Virol.">
        <title>Porcine Epidemic Diarrhea Virus Deficient in RNA Cap Guanine-N-7 Methylation Is Attenuated and Induces Higher Type I and III Interferon Responses.</title>
        <authorList>
            <person name="Lu Y."/>
            <person name="Cai H."/>
            <person name="Lu M."/>
            <person name="Ma Y."/>
            <person name="Li A."/>
            <person name="Gao Y."/>
            <person name="Zhou J."/>
            <person name="Gu H."/>
            <person name="Li J."/>
            <person name="Gu J."/>
        </authorList>
    </citation>
    <scope>CATALYTIC ACTIVITY (GUANINE-N7 METHYLTRANSFERASE NSP14)</scope>
    <scope>FUNCTION (GUANINE-N7 METHYLTRANSFERASE NSP14)</scope>
    <scope>MUTAGENESIS OF ASP-5954; GLY-5956; 5958-PRO-LYS-5959 AND ASP-5974</scope>
</reference>
<reference key="7">
    <citation type="journal article" date="2020" name="Viruses">
        <title>Porcine Epidemic Diarrhea Virus nsp15 Antagonizes Interferon Signaling by RNA Degradation of TBK1 and IRF3.</title>
        <authorList>
            <person name="Wu Y."/>
            <person name="Zhang H."/>
            <person name="Shi Z."/>
            <person name="Chen J."/>
            <person name="Li M."/>
            <person name="Shi H."/>
            <person name="Shi D."/>
            <person name="Guo L."/>
            <person name="Feng L."/>
        </authorList>
    </citation>
    <scope>FUNCTION (URIDYLATE-SPECIFIC ENDORIBONUCLEASE NSP15)</scope>
    <scope>MUTAGENESIS OF HIS-6367; HIS-6382; ASP-6406 AND LYS-6423</scope>
</reference>
<reference key="8">
    <citation type="journal article" date="2022" name="Front. Microbiol.">
        <title>Porcine Epidemic Diarrhea Virus Infection Subverts Arsenite-Induced Stress Granules Formation.</title>
        <authorList>
            <person name="Guo X."/>
            <person name="Yu K."/>
            <person name="Xin Z."/>
            <person name="Liu L."/>
            <person name="Gao Y."/>
            <person name="Hu F."/>
            <person name="Ma X."/>
            <person name="Yu K."/>
            <person name="Li Y."/>
            <person name="Huang B."/>
            <person name="Yan Z."/>
            <person name="Wu J."/>
        </authorList>
    </citation>
    <scope>FUNCTION (3C-LIKE PROTEINASE NSP5)</scope>
    <scope>FUNCTION (NON-STRUCTURAL PROTEIN 3)</scope>
    <source>
        <strain>SDSX16</strain>
    </source>
</reference>
<reference evidence="43 44" key="9">
    <citation type="journal article" date="2018" name="J. Virol.">
        <title>Dimerization of Coronavirus nsp9 with Diverse Modes Enhances Its Nucleic Acid Binding Affinity.</title>
        <authorList>
            <person name="Zeng Z."/>
            <person name="Deng F."/>
            <person name="Shi K."/>
            <person name="Ye G."/>
            <person name="Wang G."/>
            <person name="Fang L."/>
            <person name="Xiao S."/>
            <person name="Fu Z."/>
            <person name="Peng G."/>
        </authorList>
    </citation>
    <scope>X-RAY CRYSTALLOGRAPHY (2.90 ANGSTROMS) OF 3858-3965</scope>
    <scope>SUBUNIT (RNA-CAPPING ENZYME SUBUNIT NSP9)</scope>
    <scope>MUTAGENESIS OF CYS-3916 AND 3952-GLY--GLY-3959</scope>
    <scope>DNA-BINDING (RNA-CAPPING ENZYME SUBUNIT NSP9)</scope>
    <scope>FUNCTION (RNA-CAPPING ENZYME SUBUNIT NSP9)</scope>
</reference>
<proteinExistence type="evidence at protein level"/>
<protein>
    <recommendedName>
        <fullName>Replicase polyprotein 1ab</fullName>
        <shortName>pp1ab</shortName>
    </recommendedName>
    <alternativeName>
        <fullName>ORF1ab polyprotein</fullName>
    </alternativeName>
    <component>
        <recommendedName>
            <fullName>Non-structural protein 1</fullName>
            <shortName>nsp1</shortName>
        </recommendedName>
        <alternativeName>
            <fullName>p9</fullName>
        </alternativeName>
    </component>
    <component>
        <recommendedName>
            <fullName>Non-structural protein 2</fullName>
            <shortName>nsp2</shortName>
        </recommendedName>
        <alternativeName>
            <fullName>p87</fullName>
        </alternativeName>
    </component>
    <component>
        <recommendedName>
            <fullName evidence="6">Papain-like protease nsp3</fullName>
            <ecNumber evidence="6">3.4.19.12</ecNumber>
            <ecNumber>3.4.22.-</ecNumber>
        </recommendedName>
        <alternativeName>
            <fullName>Non-structural protein 3</fullName>
            <shortName>nsp3</shortName>
        </alternativeName>
        <alternativeName>
            <fullName>PL1-PRO/PL2-PRO</fullName>
        </alternativeName>
        <alternativeName>
            <fullName>PLP1/PLP2</fullName>
        </alternativeName>
        <alternativeName>
            <fullName>Papain-like proteinase</fullName>
            <shortName>PL-PRO</shortName>
        </alternativeName>
        <alternativeName>
            <fullName>p195</fullName>
        </alternativeName>
    </component>
    <component>
        <recommendedName>
            <fullName>Non-structural protein 4</fullName>
            <shortName>nsp4</shortName>
        </recommendedName>
        <alternativeName>
            <fullName>Peptide HD2</fullName>
        </alternativeName>
    </component>
    <component>
        <recommendedName>
            <fullName>3C-like proteinase nsp5</fullName>
            <shortName>3CL-PRO</shortName>
            <shortName>3CLp</shortName>
            <ecNumber evidence="35">3.4.22.-</ecNumber>
        </recommendedName>
        <alternativeName>
            <fullName>M-PRO</fullName>
        </alternativeName>
        <alternativeName>
            <fullName>nsp5</fullName>
        </alternativeName>
        <alternativeName>
            <fullName>p34</fullName>
        </alternativeName>
    </component>
    <component>
        <recommendedName>
            <fullName>Non-structural protein 6</fullName>
            <shortName>nsp6</shortName>
        </recommendedName>
    </component>
    <component>
        <recommendedName>
            <fullName>Non-structural protein 7</fullName>
            <shortName>nsp7</shortName>
        </recommendedName>
        <alternativeName>
            <fullName>p5</fullName>
        </alternativeName>
    </component>
    <component>
        <recommendedName>
            <fullName>Non-structural protein 8</fullName>
            <shortName>nsp8</shortName>
        </recommendedName>
        <alternativeName>
            <fullName>p23</fullName>
        </alternativeName>
    </component>
    <component>
        <recommendedName>
            <fullName>Viral protein genome-linked nsp9</fullName>
        </recommendedName>
        <alternativeName>
            <fullName>Non-structural protein 9</fullName>
            <shortName>nsp9</shortName>
        </alternativeName>
        <alternativeName>
            <fullName>RNA-capping enzyme subunit nsp9</fullName>
        </alternativeName>
        <alternativeName>
            <fullName>p12</fullName>
        </alternativeName>
    </component>
    <component>
        <recommendedName>
            <fullName>Non-structural protein 10</fullName>
            <shortName>nsp10</shortName>
        </recommendedName>
        <alternativeName>
            <fullName>Growth factor-like peptide</fullName>
            <shortName>GFL</shortName>
        </alternativeName>
        <alternativeName>
            <fullName>p14</fullName>
        </alternativeName>
    </component>
    <component>
        <recommendedName>
            <fullName>RNA-directed RNA polymerase nsp12</fullName>
            <shortName>Pol</shortName>
            <shortName>RdRp</shortName>
            <ecNumber>2.7.7.48</ecNumber>
            <ecNumber>2.7.7.50</ecNumber>
        </recommendedName>
        <alternativeName>
            <fullName>nsp12</fullName>
        </alternativeName>
        <alternativeName>
            <fullName>p100</fullName>
        </alternativeName>
    </component>
    <component>
        <recommendedName>
            <fullName>Helicase nsp13</fullName>
            <shortName>Hel</shortName>
            <ecNumber>3.6.4.12</ecNumber>
            <ecNumber>3.6.4.13</ecNumber>
        </recommendedName>
        <alternativeName>
            <fullName>nsp13</fullName>
        </alternativeName>
        <alternativeName>
            <fullName>p66</fullName>
        </alternativeName>
        <alternativeName>
            <fullName>p66-HEL</fullName>
        </alternativeName>
    </component>
    <component>
        <recommendedName>
            <fullName>Guanine-N7 methyltransferase nsp14</fullName>
            <ecNumber evidence="38">2.1.1.56</ecNumber>
            <ecNumber>3.1.13.-</ecNumber>
        </recommendedName>
        <alternativeName>
            <fullName>Non-structural protein 14</fullName>
            <shortName>nsp14</shortName>
        </alternativeName>
        <alternativeName>
            <fullName>Proofreading exoribonuclease nsp14</fullName>
            <shortName>ExoN</shortName>
        </alternativeName>
    </component>
    <component>
        <recommendedName>
            <fullName>Uridylate-specific endoribonuclease nsp15</fullName>
            <ecNumber evidence="6">4.6.1.-</ecNumber>
        </recommendedName>
        <alternativeName>
            <fullName>NendoU</fullName>
        </alternativeName>
        <alternativeName>
            <fullName>Non-structural protein 15</fullName>
            <shortName>nsp15</shortName>
        </alternativeName>
    </component>
    <component>
        <recommendedName>
            <fullName>2'-O-methyltransferase nsp16</fullName>
            <ecNumber>2.1.1.57</ecNumber>
        </recommendedName>
        <alternativeName>
            <fullName>Non-structural protein 16</fullName>
            <shortName>nsp16</shortName>
        </alternativeName>
    </component>
</protein>
<gene>
    <name type="primary">rep</name>
    <name type="ORF">1a-1b</name>
</gene>
<name>R1AB_PEDV7</name>
<accession>P0C6Y4</accession>
<accession>Q91AV2</accession>
<comment type="function">
    <molecule>Replicase polyprotein 1ab</molecule>
    <text>Multifunctional protein responsible for the transcription of negative stranded RNA, leader RNA, subgenomic mRNAs and progeny virion RNA as well as proteinases responsible for the cleavage of the polyprotein into functional products.</text>
</comment>
<comment type="function">
    <molecule>Non-structural protein 1</molecule>
    <text evidence="34 36">Plays a role in the inhibition of host interferon and pro-inflammatory cytokines production. Suppresses host RELA/p65 activation by blocking NFKBIA phosphorylation (PubMed:28715653). Targets also the RLR pathway downstream of the IRF3 activation by targeting host CREBBP to proteasomal degradation (PubMed:26773386).</text>
</comment>
<comment type="function">
    <molecule>Papain-like protease nsp3</molecule>
    <text evidence="6 40">Responsible for the cleavages located at the N-terminus of the replicase polyprotein. Participates together with nsp4 in the assembly of virally-induced cytoplasmic double-membrane vesicles necessary for viral replication. Forms a molecular pore spanning the double membrane of the coronavirus replication organelle (By similarity). In addition, PLP2 possesses a deubiquitinating/deISGylating activity and processes both 'Lys-48'- and 'Lys-63'-linked polyubiquitin chains from cellular substrates. PLP2 also antagonizes innate immune induction of type I interferon by blocking the nuclear translocation of host IRF-3 (By similarity). Participates in the inhibition of the integrated stress response (ISR) in the infected host cell (PubMed:35859736).</text>
</comment>
<comment type="function">
    <molecule>Non-structural protein 4</molecule>
    <text evidence="3">Participates in the assembly of virally-induced cytoplasmic double-membrane vesicles necessary for viral replication.</text>
</comment>
<comment type="function">
    <molecule>3C-like proteinase nsp5</molecule>
    <text evidence="6 11 40">Responsible for the majority of cleavages as it cleaves the C-terminus of replicase polyprotein at 11 sites (By similarity). Recognizes substrates containing the core sequence [ILMVF]-Q-|-[SGACN] (By similarity). Also contains an ADP-ribose-1''-phosphate (ADRP)-binding function (By similarity). Participates in the inhibition of the integrated stress response (ISR) in the infected host cell (PubMed:35859736).</text>
</comment>
<comment type="function">
    <molecule>Non-structural protein 6</molecule>
    <text evidence="3">Plays a role in the initial induction of autophagosomes from host endoplasmic reticulum. Later, limits the expansion of these phagosomes that are no longer able to deliver viral components to lysosomes.</text>
</comment>
<comment type="function">
    <molecule>Non-structural protein 7</molecule>
    <text evidence="6">Plays a role in viral RNA synthesis. Forms a hexadecamer with nsp8 (8 subunits of each) that may participate in viral replication by acting as a primase. Alternatively, may synthesize substantially longer products than oligonucleotide primers.</text>
</comment>
<comment type="function">
    <molecule>Non-structural protein 8</molecule>
    <text evidence="6">Plays a role in viral RNA synthesis. Forms a hexadecamer with nsp7 (8 subunits of each) that may participate in viral replication by acting as a primase. Alternatively, may synthesize substantially longer products than oligonucleotide primers.</text>
</comment>
<comment type="function">
    <molecule>Viral protein genome-linked nsp9</molecule>
    <text evidence="6 37">Forms a primer, NSP9-pU, which is utilized by the polymerase for the initiation of RNA chains. Interacts with ribosome signal recognition particle RNA (SRP). Together with NSP8, suppress protein integration into the cell membrane, thereby disrupting host immune defenses.</text>
</comment>
<comment type="function">
    <molecule>Non-structural protein 10</molecule>
    <text evidence="6">Plays a pivotal role in viral transcription by stimulating both nsp14 3'-5' exoribonuclease and nsp16 2'-O-methyltransferase activities. Therefore plays an essential role in viral mRNAs cap methylation.</text>
</comment>
<comment type="function">
    <molecule>RNA-directed RNA polymerase nsp12</molecule>
    <text evidence="6">RNA-directed RNA polymerase that catalyzes the transcription of viral genomic and subgenomic RNAs. Acts in complex with nsp7 and nsp8 to transcribe both the minus and positive strands of genomic RNA. The kinase-like NiRAN domain of NSP12 attaches one or more nucleotides to the amino terminus of NSP9, forming a covalent RNA-protein intermediate that serves as transcription/replication primer. Subgenomic RNAs (sgRNAs) are formed by discontinuous transcription: The polymerase has the ability to pause at transcription-regulating sequences (TRS) and jump to the leader TRS, resulting in a major deletion. This creates a series of subgenomic RNAs that are replicated, transcribed and translated. In addition, Nsp12 is a subunit of the viral RNA capping enzyme that catalyzes the RNA guanylyltransferase reaction for genomic and sub-genomic RNAs. Subsequently, the NiRAN domain transfers RNA to GDP, and forms the core cap structure GpppA-RNA.</text>
</comment>
<comment type="function">
    <molecule>Helicase nsp13</molecule>
    <text evidence="6">Plays a role in viral RNA synthesis (By similarity). Multi-functional protein with a zinc-binding domain in N-terminus displaying RNA and DNA duplex-unwinding activities with 5' to 3' polarity. ATPase activity is strongly stimulated by poly(U), poly(dT), poly(C), poly(dA), but not by poly(G).</text>
</comment>
<comment type="function">
    <molecule>Guanine-N7 methyltransferase nsp14</molecule>
    <text evidence="3 38">Plays a role in viral RNA synthesis through two distinct activities. The N7-guanine methyltransferase activity plays a role in the formation of the cap structure GpppA-RNA (PubMed:32461321). The proofreading exoribonuclease reduces the sensitivity of the virus to RNA mutagens during replication (By similarity). This activity acts on both ssRNA and dsRNA in a 3'-5' direction (By similarity).</text>
</comment>
<comment type="function">
    <molecule>Uridylate-specific endoribonuclease nsp15</molecule>
    <text evidence="3 39">Plays a role in viral transcription/replication and prevents the simultaneous activation of host cell dsRNA sensors, such as MDA5/IFIH1, OAS, and PKR (By similarity). Acts by degrading the 5'-polyuridines generated during replication of the poly(A) region of viral genomic and subgenomic RNAs (By similarity). Catalyzes a two-step reaction in which a 2'3'-cyclic phosphate (2'3'-cP) is first generated by 2'-O transesterification, which is then hydrolyzed to a 3'-phosphate (3'-P) (By similarity). If not degraded, poly(U) RNA would hybridize with poly(A) RNA tails and activate host dsRNA sensors (By similarity). Decreases the RNA levels and thus the expression of host TBK1 and IRF3, antagonizing the host innate response (PubMed:32486349).</text>
</comment>
<comment type="catalytic activity">
    <molecule>Papain-like protease nsp3</molecule>
    <reaction>
        <text>Thiol-dependent hydrolysis of ester, thioester, amide, peptide and isopeptide bonds formed by the C-terminal Gly of ubiquitin (a 76-residue protein attached to proteins as an intracellular targeting signal).</text>
        <dbReference type="EC" id="3.4.19.12"/>
    </reaction>
</comment>
<comment type="catalytic activity">
    <molecule>RNA-directed RNA polymerase nsp12</molecule>
    <reaction evidence="5">
        <text>a 5'-end diphospho-ribonucleoside in mRNA + GTP + H(+) = a 5'-end (5'-triphosphoguanosine)-ribonucleoside in mRNA + diphosphate</text>
        <dbReference type="Rhea" id="RHEA:67012"/>
        <dbReference type="Rhea" id="RHEA-COMP:17165"/>
        <dbReference type="Rhea" id="RHEA-COMP:17166"/>
        <dbReference type="ChEBI" id="CHEBI:15378"/>
        <dbReference type="ChEBI" id="CHEBI:33019"/>
        <dbReference type="ChEBI" id="CHEBI:37565"/>
        <dbReference type="ChEBI" id="CHEBI:167616"/>
        <dbReference type="ChEBI" id="CHEBI:167617"/>
        <dbReference type="EC" id="2.7.7.50"/>
    </reaction>
    <physiologicalReaction direction="right-to-left" evidence="5">
        <dbReference type="Rhea" id="RHEA:67014"/>
    </physiologicalReaction>
</comment>
<comment type="catalytic activity">
    <molecule>RNA-directed RNA polymerase nsp12</molecule>
    <reaction>
        <text>RNA(n) + a ribonucleoside 5'-triphosphate = RNA(n+1) + diphosphate</text>
        <dbReference type="Rhea" id="RHEA:21248"/>
        <dbReference type="Rhea" id="RHEA-COMP:14527"/>
        <dbReference type="Rhea" id="RHEA-COMP:17342"/>
        <dbReference type="ChEBI" id="CHEBI:33019"/>
        <dbReference type="ChEBI" id="CHEBI:61557"/>
        <dbReference type="ChEBI" id="CHEBI:140395"/>
        <dbReference type="EC" id="2.7.7.48"/>
    </reaction>
</comment>
<comment type="catalytic activity">
    <molecule>Helicase nsp13</molecule>
    <reaction>
        <text>ATP + H2O = ADP + phosphate + H(+)</text>
        <dbReference type="Rhea" id="RHEA:13065"/>
        <dbReference type="ChEBI" id="CHEBI:15377"/>
        <dbReference type="ChEBI" id="CHEBI:15378"/>
        <dbReference type="ChEBI" id="CHEBI:30616"/>
        <dbReference type="ChEBI" id="CHEBI:43474"/>
        <dbReference type="ChEBI" id="CHEBI:456216"/>
        <dbReference type="EC" id="3.6.4.12"/>
    </reaction>
</comment>
<comment type="catalytic activity">
    <molecule>Helicase nsp13</molecule>
    <reaction>
        <text>ATP + H2O = ADP + phosphate + H(+)</text>
        <dbReference type="Rhea" id="RHEA:13065"/>
        <dbReference type="ChEBI" id="CHEBI:15377"/>
        <dbReference type="ChEBI" id="CHEBI:15378"/>
        <dbReference type="ChEBI" id="CHEBI:30616"/>
        <dbReference type="ChEBI" id="CHEBI:43474"/>
        <dbReference type="ChEBI" id="CHEBI:456216"/>
        <dbReference type="EC" id="3.6.4.13"/>
    </reaction>
</comment>
<comment type="catalytic activity">
    <molecule>Guanine-N7 methyltransferase nsp14</molecule>
    <reaction evidence="38">
        <text>a 5'-end (5'-triphosphoguanosine)-ribonucleoside in mRNA + S-adenosyl-L-methionine = a 5'-end (N(7)-methyl 5'-triphosphoguanosine)-ribonucleoside in mRNA + S-adenosyl-L-homocysteine</text>
        <dbReference type="Rhea" id="RHEA:67008"/>
        <dbReference type="Rhea" id="RHEA-COMP:17166"/>
        <dbReference type="Rhea" id="RHEA-COMP:17167"/>
        <dbReference type="ChEBI" id="CHEBI:57856"/>
        <dbReference type="ChEBI" id="CHEBI:59789"/>
        <dbReference type="ChEBI" id="CHEBI:156461"/>
        <dbReference type="ChEBI" id="CHEBI:167617"/>
        <dbReference type="EC" id="2.1.1.56"/>
    </reaction>
</comment>
<comment type="catalytic activity">
    <molecule>Uridylate-specific endoribonuclease nsp15</molecule>
    <reaction evidence="3">
        <text>uridylyl-uridylyl-ribonucleotide-RNA = a 3'-end uridylyl-2',3'-cyclophospho-uridine-RNA + a 5'-end dephospho-ribonucleoside-RNA</text>
        <dbReference type="Rhea" id="RHEA:67732"/>
        <dbReference type="Rhea" id="RHEA-COMP:13936"/>
        <dbReference type="Rhea" id="RHEA-COMP:17334"/>
        <dbReference type="Rhea" id="RHEA-COMP:17335"/>
        <dbReference type="ChEBI" id="CHEBI:138284"/>
        <dbReference type="ChEBI" id="CHEBI:173079"/>
        <dbReference type="ChEBI" id="CHEBI:173080"/>
    </reaction>
</comment>
<comment type="catalytic activity">
    <molecule>2'-O-methyltransferase nsp16</molecule>
    <reaction evidence="3">
        <text>a 5'-end (N(7)-methyl 5'-triphosphoguanosine)-ribonucleoside in mRNA + S-adenosyl-L-methionine = a 5'-end (N(7)-methyl 5'-triphosphoguanosine)-(2'-O-methyl-ribonucleoside) in mRNA + S-adenosyl-L-homocysteine + H(+)</text>
        <dbReference type="Rhea" id="RHEA:67020"/>
        <dbReference type="Rhea" id="RHEA-COMP:17167"/>
        <dbReference type="Rhea" id="RHEA-COMP:17168"/>
        <dbReference type="ChEBI" id="CHEBI:15378"/>
        <dbReference type="ChEBI" id="CHEBI:57856"/>
        <dbReference type="ChEBI" id="CHEBI:59789"/>
        <dbReference type="ChEBI" id="CHEBI:156461"/>
        <dbReference type="ChEBI" id="CHEBI:167609"/>
        <dbReference type="EC" id="2.1.1.57"/>
    </reaction>
</comment>
<comment type="cofactor">
    <molecule>Uridylate-specific endoribonuclease nsp15</molecule>
    <cofactor evidence="3">
        <name>Mn(2+)</name>
        <dbReference type="ChEBI" id="CHEBI:29035"/>
    </cofactor>
    <text evidence="3">Likely affects Nsp15 binding to RNA.</text>
</comment>
<comment type="activity regulation">
    <molecule>3C-like proteinase nsp5</molecule>
    <text evidence="35">Inhibited by the substrate-analog Cbz-Val-Asn-Ser-Thr-Leu-Gln-CMK. Inhibited by (R)-16 (PubMed:27173881).</text>
</comment>
<comment type="subunit">
    <molecule>Non-structural protein 4</molecule>
    <text evidence="3">Interacts with PL-PRO and nsp6.</text>
</comment>
<comment type="subunit">
    <molecule>3C-like proteinase nsp5</molecule>
    <text evidence="5 35">Monomer (By similarity). Homodimer; disulfide-linked (PubMed:27173881).</text>
</comment>
<comment type="subunit">
    <molecule>Non-structural protein 7</molecule>
    <text evidence="5">Interacts with nsp8 and nsp12 to form the replication-transcription complex (RTC): nsp12, nsp7, two subunits of nsp8, and up to two subunits of nsp13. Eight copies of nsp7 and eight copies of nsp8 assemble to form a heterohexadecamer dsRNA-encircling ring structure.</text>
</comment>
<comment type="subunit">
    <molecule>Non-structural protein 8</molecule>
    <text evidence="5">Interacts with nsp7, nsp13 and nsp12 to form the replication-transcription complex (RTC): nsp12, nsp7, two subunits of nsp8, and up to two subunits of nsp13. Eight copies of nsp7 and eight copies of nsp8 assemble to form a heterohexadecamer dsRNA-encircling ring structure.</text>
</comment>
<comment type="subunit">
    <molecule>Viral protein genome-linked nsp9</molecule>
    <text evidence="37">Homodimer.</text>
</comment>
<comment type="subunit">
    <molecule>Non-structural protein 10</molecule>
    <text evidence="3">Forms a dodecamer and interacts with nsp14 and nsp16; these interactions enhance nsp14 and nsp16 enzymatic activities.</text>
</comment>
<comment type="interaction">
    <interactant intactId="EBI-26366617">
        <id>PRO_0000037375</id>
    </interactant>
    <interactant intactId="EBI-26366633">
        <id>PRO_0000037376</id>
        <label>rep</label>
        <dbReference type="UniProtKB" id="P0C6Y4"/>
    </interactant>
    <organismsDiffer>false</organismsDiffer>
    <experiments>3</experiments>
</comment>
<comment type="interaction">
    <interactant intactId="EBI-25590411">
        <id>PRO_0000037377</id>
    </interactant>
    <interactant intactId="EBI-25590411">
        <id>PRO_0000037377</id>
        <label>rep</label>
        <dbReference type="UniProtKB" id="P0C6Y4"/>
    </interactant>
    <organismsDiffer>false</organismsDiffer>
    <experiments>3</experiments>
</comment>
<comment type="subcellular location">
    <molecule>Non-structural protein 1</molecule>
    <subcellularLocation>
        <location evidence="34">Host cytoplasm</location>
    </subcellularLocation>
    <subcellularLocation>
        <location evidence="34">Host nucleus</location>
    </subcellularLocation>
</comment>
<comment type="subcellular location">
    <molecule>Papain-like protease nsp3</molecule>
    <subcellularLocation>
        <location evidence="3">Host membrane</location>
        <topology evidence="3">Multi-pass membrane protein</topology>
    </subcellularLocation>
</comment>
<comment type="subcellular location">
    <molecule>Non-structural protein 4</molecule>
    <subcellularLocation>
        <location evidence="3">Host membrane</location>
        <topology evidence="3">Multi-pass membrane protein</topology>
    </subcellularLocation>
</comment>
<comment type="subcellular location">
    <molecule>Non-structural protein 6</molecule>
    <subcellularLocation>
        <location evidence="3">Host membrane</location>
        <topology evidence="3">Multi-pass membrane protein</topology>
    </subcellularLocation>
</comment>
<comment type="subcellular location">
    <molecule>Non-structural protein 7</molecule>
    <subcellularLocation>
        <location evidence="3">Host cytoplasm</location>
        <location evidence="3">Host perinuclear region</location>
    </subcellularLocation>
    <subcellularLocation>
        <location evidence="5">Host cytoplasm</location>
    </subcellularLocation>
    <subcellularLocation>
        <location evidence="5">Host endoplasmic reticulum</location>
    </subcellularLocation>
    <text evidence="1">nsp7, nsp8, nsp9 and nsp10 are localized in cytoplasmic foci, largely perinuclear. Late in infection, they merge into confluent complexes (By similarity).</text>
</comment>
<comment type="subcellular location">
    <molecule>Non-structural protein 8</molecule>
    <subcellularLocation>
        <location evidence="4">Host cytoplasm</location>
        <location evidence="4">Host perinuclear region</location>
    </subcellularLocation>
    <subcellularLocation>
        <location evidence="5">Host cytoplasm</location>
    </subcellularLocation>
    <subcellularLocation>
        <location evidence="5">Host endoplasmic reticulum</location>
    </subcellularLocation>
    <text evidence="1">nsp7, nsp8, nsp9 and nsp10 are localized in cytoplasmic foci, largely perinuclear. Late in infection, they merge into confluent complexes (By similarity).</text>
</comment>
<comment type="subcellular location">
    <molecule>Viral protein genome-linked nsp9</molecule>
    <subcellularLocation>
        <location evidence="4">Host cytoplasm</location>
        <location evidence="4">Host perinuclear region</location>
    </subcellularLocation>
    <subcellularLocation>
        <location evidence="5">Host cytoplasm</location>
    </subcellularLocation>
    <subcellularLocation>
        <location evidence="5">Host endoplasmic reticulum</location>
    </subcellularLocation>
    <text evidence="4">nsp7, nsp8, nsp9 and nsp10 are localized in cytoplasmic foci, largely perinuclear. Late in infection, they merge into confluent complexes.</text>
</comment>
<comment type="subcellular location">
    <molecule>Non-structural protein 10</molecule>
    <subcellularLocation>
        <location evidence="4">Host cytoplasm</location>
        <location evidence="4">Host perinuclear region</location>
    </subcellularLocation>
    <subcellularLocation>
        <location evidence="5">Host cytoplasm</location>
    </subcellularLocation>
    <subcellularLocation>
        <location evidence="5">Host endoplasmic reticulum</location>
    </subcellularLocation>
    <text evidence="4">nsp7, nsp8, nsp9 and nsp10 are localized in cytoplasmic foci, largely perinuclear. Late in infection, they merge into confluent complexes.</text>
</comment>
<comment type="subcellular location">
    <molecule>Helicase nsp13</molecule>
    <subcellularLocation>
        <location evidence="42">Host endoplasmic reticulum-Golgi intermediate compartment</location>
    </subcellularLocation>
    <text evidence="1">The helicase interacts with the N protein in membranous complexes and colocalizes with sites of synthesis of new viral RNA.</text>
</comment>
<comment type="subcellular location">
    <molecule>Uridylate-specific endoribonuclease nsp15</molecule>
    <subcellularLocation>
        <location evidence="4">Host cytoplasm</location>
        <location evidence="4">Host perinuclear region</location>
    </subcellularLocation>
</comment>
<comment type="subcellular location">
    <molecule>2'-O-methyltransferase nsp16</molecule>
    <subcellularLocation>
        <location>Host nucleus</location>
    </subcellularLocation>
    <subcellularLocation>
        <location evidence="5">Host cytoplasm</location>
    </subcellularLocation>
</comment>
<comment type="alternative products">
    <event type="ribosomal frameshifting"/>
    <isoform>
        <id>P0C6Y4-1</id>
        <name>Replicase polyprotein 1ab</name>
        <name>pp1ab</name>
        <sequence type="displayed"/>
    </isoform>
    <isoform>
        <id>P0C6V6-1</id>
        <name>Replicase polyprotein 1a</name>
        <name>pp1a</name>
        <name>ORF1a polyprotein</name>
        <sequence type="external"/>
    </isoform>
</comment>
<comment type="domain">
    <molecule>Replicase polyprotein 1ab</molecule>
    <text>The hydrophobic domains (HD) could mediate the membrane association of the replication complex and thereby alter the architecture of the host cell membrane.</text>
</comment>
<comment type="domain">
    <molecule>Papain-like protease nsp3</molecule>
    <text evidence="2">Contains two papain-like protease domains (PLP1 and PLP2 or PLpro).</text>
</comment>
<comment type="PTM">
    <molecule>Replicase polyprotein 1ab</molecule>
    <text evidence="1">Specific enzymatic cleavages in vivo by its own proteases yield mature proteins. 3CL-PRO and PL-PRO proteinases are autocatalytically processed (By similarity).</text>
</comment>
<comment type="miscellaneous">
    <molecule>Isoform Replicase polyprotein 1ab</molecule>
    <text>Produced by -1 ribosomal frameshifting at the 1a-1b genes boundary.</text>
</comment>
<comment type="similarity">
    <text evidence="42">Belongs to the coronaviruses polyprotein 1ab family.</text>
</comment>
<comment type="sequence caution" evidence="42">
    <conflict type="erroneous gene model prediction">
        <sequence resource="EMBL-CDS" id="AAK38661"/>
    </conflict>
</comment>
<feature type="chain" id="PRO_0000458147" description="Replicase polyprotein 1ab">
    <location>
        <begin position="1"/>
        <end position="6781"/>
    </location>
</feature>
<feature type="chain" id="PRO_0000037369" description="Non-structural protein 1" evidence="1">
    <location>
        <begin position="1"/>
        <end position="110"/>
    </location>
</feature>
<feature type="chain" id="PRO_0000037370" description="Non-structural protein 2" evidence="1">
    <location>
        <begin position="111"/>
        <end position="895"/>
    </location>
</feature>
<feature type="chain" id="PRO_0000037371" description="Papain-like protease nsp3" evidence="1">
    <location>
        <begin position="896"/>
        <end position="2516"/>
    </location>
</feature>
<feature type="chain" id="PRO_0000037372" description="Non-structural protein 4" evidence="1">
    <location>
        <begin position="2517"/>
        <end position="2997"/>
    </location>
</feature>
<feature type="chain" id="PRO_0000037373" description="3C-like proteinase nsp5" evidence="1">
    <location>
        <begin position="2998"/>
        <end position="3299"/>
    </location>
</feature>
<feature type="chain" id="PRO_0000037374" description="Non-structural protein 6" evidence="1">
    <location>
        <begin position="3300"/>
        <end position="3579"/>
    </location>
</feature>
<feature type="chain" id="PRO_0000037375" description="Non-structural protein 7" evidence="1">
    <location>
        <begin position="3580"/>
        <end position="3662"/>
    </location>
</feature>
<feature type="chain" id="PRO_0000037376" description="Non-structural protein 8" evidence="1">
    <location>
        <begin position="3663"/>
        <end position="3857"/>
    </location>
</feature>
<feature type="chain" id="PRO_0000037377" description="Viral protein genome-linked nsp9" evidence="1">
    <location>
        <begin position="3858"/>
        <end position="3965"/>
    </location>
</feature>
<feature type="chain" id="PRO_0000037378" description="Non-structural protein 10" evidence="1">
    <location>
        <begin position="3966"/>
        <end position="4100"/>
    </location>
</feature>
<feature type="chain" id="PRO_0000037379" description="RNA-directed RNA polymerase nsp12" evidence="1">
    <location>
        <begin position="4101"/>
        <end position="5027"/>
    </location>
</feature>
<feature type="chain" id="PRO_0000037380" description="Helicase nsp13">
    <location>
        <begin position="5028"/>
        <end position="5546"/>
    </location>
</feature>
<feature type="chain" id="PRO_0000037381" description="Guanine-N7 methyltransferase nsp14" evidence="1">
    <location>
        <begin position="5547"/>
        <end position="6141"/>
    </location>
</feature>
<feature type="chain" id="PRO_0000037382" description="Uridylate-specific endoribonuclease nsp15" evidence="1">
    <location>
        <begin position="6142"/>
        <end position="6480"/>
    </location>
</feature>
<feature type="chain" id="PRO_0000037383" description="2'-O-methyltransferase nsp16" evidence="1">
    <location>
        <begin position="6481"/>
        <end position="6781"/>
    </location>
</feature>
<feature type="transmembrane region" description="Helical" evidence="7">
    <location>
        <begin position="1959"/>
        <end position="1979"/>
    </location>
</feature>
<feature type="transmembrane region" description="Helical" evidence="7">
    <location>
        <begin position="2022"/>
        <end position="2042"/>
    </location>
</feature>
<feature type="transmembrane region" description="Helical" evidence="7">
    <location>
        <begin position="2105"/>
        <end position="2125"/>
    </location>
</feature>
<feature type="transmembrane region" description="Helical" evidence="7">
    <location>
        <begin position="2127"/>
        <end position="2147"/>
    </location>
</feature>
<feature type="transmembrane region" description="Helical" evidence="7">
    <location>
        <begin position="2150"/>
        <end position="2170"/>
    </location>
</feature>
<feature type="transmembrane region" description="Helical" evidence="7">
    <location>
        <begin position="2528"/>
        <end position="2548"/>
    </location>
</feature>
<feature type="transmembrane region" description="Helical" evidence="7">
    <location>
        <begin position="2619"/>
        <end position="2639"/>
    </location>
</feature>
<feature type="transmembrane region" description="Helical" evidence="7">
    <location>
        <begin position="2654"/>
        <end position="2674"/>
    </location>
</feature>
<feature type="transmembrane region" description="Helical" evidence="7">
    <location>
        <begin position="2754"/>
        <end position="2774"/>
    </location>
</feature>
<feature type="transmembrane region" description="Helical" evidence="7">
    <location>
        <begin position="2787"/>
        <end position="2807"/>
    </location>
</feature>
<feature type="transmembrane region" description="Helical" evidence="7">
    <location>
        <begin position="2814"/>
        <end position="2834"/>
    </location>
</feature>
<feature type="transmembrane region" description="Helical" evidence="7">
    <location>
        <begin position="2863"/>
        <end position="2883"/>
    </location>
</feature>
<feature type="transmembrane region" description="Helical" evidence="7">
    <location>
        <begin position="3336"/>
        <end position="3356"/>
    </location>
</feature>
<feature type="transmembrane region" description="Helical" evidence="7">
    <location>
        <begin position="3361"/>
        <end position="3381"/>
    </location>
</feature>
<feature type="transmembrane region" description="Helical" evidence="7">
    <location>
        <begin position="3399"/>
        <end position="3419"/>
    </location>
</feature>
<feature type="transmembrane region" description="Helical" evidence="7">
    <location>
        <begin position="3431"/>
        <end position="3451"/>
    </location>
</feature>
<feature type="transmembrane region" description="Helical" evidence="7">
    <location>
        <begin position="3454"/>
        <end position="3474"/>
    </location>
</feature>
<feature type="transmembrane region" description="Helical" evidence="7">
    <location>
        <begin position="3476"/>
        <end position="3496"/>
    </location>
</feature>
<feature type="transmembrane region" description="Helical" evidence="7">
    <location>
        <begin position="3500"/>
        <end position="3520"/>
    </location>
</feature>
<feature type="domain" description="CoV Nsp1 globular" evidence="26">
    <location>
        <begin position="2"/>
        <end position="109"/>
    </location>
</feature>
<feature type="domain" description="CoV Nsp2 N-terminal" evidence="27">
    <location>
        <begin position="112"/>
        <end position="364"/>
    </location>
</feature>
<feature type="domain" description="CoV Nsp2 middle" evidence="28">
    <location>
        <begin position="383"/>
        <end position="776"/>
    </location>
</feature>
<feature type="domain" description="CoV Nsp2 C-terminal" evidence="29">
    <location>
        <begin position="778"/>
        <end position="895"/>
    </location>
</feature>
<feature type="domain" description="Ubiquitin-like 1" evidence="8">
    <location>
        <begin position="896"/>
        <end position="991"/>
    </location>
</feature>
<feature type="domain" description="Peptidase C16 1" evidence="9">
    <location>
        <begin position="1057"/>
        <end position="1296"/>
    </location>
</feature>
<feature type="domain" description="Macro" evidence="10">
    <location>
        <begin position="1297"/>
        <end position="1465"/>
    </location>
</feature>
<feature type="domain" description="Ubiquitin-like 2" evidence="8">
    <location>
        <begin position="1630"/>
        <end position="1685"/>
    </location>
</feature>
<feature type="domain" description="Peptidase C16 2" evidence="9">
    <location>
        <begin position="1691"/>
        <end position="1951"/>
    </location>
</feature>
<feature type="domain" description="3Ecto" evidence="31">
    <location>
        <begin position="2038"/>
        <end position="2102"/>
    </location>
</feature>
<feature type="domain" description="CoV Nsp3 Y" evidence="30">
    <location>
        <begin position="2176"/>
        <end position="2516"/>
    </location>
</feature>
<feature type="domain" description="Nsp4C" evidence="13">
    <location>
        <begin position="2902"/>
        <end position="2997"/>
    </location>
</feature>
<feature type="domain" description="Peptidase C30" evidence="11">
    <location>
        <begin position="2998"/>
        <end position="3299"/>
    </location>
</feature>
<feature type="domain" description="RdRp Nsp7 cofactor" evidence="16">
    <location>
        <begin position="3580"/>
        <end position="3662"/>
    </location>
</feature>
<feature type="domain" description="RdRp Nsp8 cofactor" evidence="17">
    <location>
        <begin position="3663"/>
        <end position="3857"/>
    </location>
</feature>
<feature type="domain" description="Nsp9 ssRNA-binding" evidence="18">
    <location>
        <begin position="3858"/>
        <end position="3965"/>
    </location>
</feature>
<feature type="domain" description="ExoN/MTase coactivator" evidence="19">
    <location>
        <begin position="3966"/>
        <end position="4103"/>
    </location>
</feature>
<feature type="domain" description="NiRAN" evidence="14">
    <location>
        <begin position="4106"/>
        <end position="4355"/>
    </location>
</feature>
<feature type="domain" description="Nsp12 Interface" evidence="32">
    <location>
        <begin position="4361"/>
        <end position="4459"/>
    </location>
</feature>
<feature type="domain" description="Nsp12 RNA-dependent RNA polymerase" evidence="15">
    <location>
        <begin position="4460"/>
        <end position="5027"/>
    </location>
</feature>
<feature type="domain" description="RdRp catalytic">
    <location>
        <begin position="4707"/>
        <end position="4869"/>
    </location>
</feature>
<feature type="domain" description="CV ZBD" evidence="12">
    <location>
        <begin position="5028"/>
        <end position="5140"/>
    </location>
</feature>
<feature type="domain" description="(+)RNA virus helicase ATP-binding">
    <location>
        <begin position="5275"/>
        <end position="5466"/>
    </location>
</feature>
<feature type="domain" description="(+)RNA virus helicase C-terminal">
    <location>
        <begin position="5467"/>
        <end position="5636"/>
    </location>
</feature>
<feature type="domain" description="ExoN" evidence="20">
    <location>
        <begin position="5696"/>
        <end position="5910"/>
    </location>
</feature>
<feature type="domain" description="N7-MTase" evidence="21">
    <location>
        <begin position="5919"/>
        <end position="6140"/>
    </location>
</feature>
<feature type="domain" description="Nsp15 N-terminal oligomerization" evidence="24">
    <location>
        <begin position="6142"/>
        <end position="6202"/>
    </location>
</feature>
<feature type="domain" description="AV-Nsp11N/CoV-Nsp15M" evidence="25">
    <location>
        <begin position="6203"/>
        <end position="6320"/>
    </location>
</feature>
<feature type="domain" description="NendoU" evidence="23">
    <location>
        <begin position="6337"/>
        <end position="6477"/>
    </location>
</feature>
<feature type="domain" description="Nidovirus-type SAM-dependent 2'-O-MTase" evidence="22">
    <location>
        <begin position="6481"/>
        <end position="6777"/>
    </location>
</feature>
<feature type="zinc finger region" description="C4-type 1; degenerate" evidence="9">
    <location>
        <begin position="1162"/>
        <end position="1193"/>
    </location>
</feature>
<feature type="zinc finger region" description="C4-type 2; degenerate" evidence="9">
    <location>
        <begin position="1808"/>
        <end position="1838"/>
    </location>
</feature>
<feature type="zinc finger region" evidence="1">
    <location>
        <begin position="4039"/>
        <end position="4055"/>
    </location>
</feature>
<feature type="zinc finger region" evidence="1">
    <location>
        <begin position="4081"/>
        <end position="4094"/>
    </location>
</feature>
<feature type="region of interest" description="Disordered" evidence="33">
    <location>
        <begin position="1009"/>
        <end position="1040"/>
    </location>
</feature>
<feature type="region of interest" description="HD1">
    <location>
        <begin position="1959"/>
        <end position="2170"/>
    </location>
</feature>
<feature type="region of interest" description="Y1" evidence="30">
    <location>
        <begin position="2176"/>
        <end position="2266"/>
    </location>
</feature>
<feature type="region of interest" description="ZF1" evidence="30">
    <location>
        <begin position="2180"/>
        <end position="2193"/>
    </location>
</feature>
<feature type="region of interest" description="ZF2" evidence="30">
    <location>
        <begin position="2226"/>
        <end position="2236"/>
    </location>
</feature>
<feature type="region of interest" description="CoV-Y" evidence="30">
    <location>
        <begin position="2267"/>
        <end position="2516"/>
    </location>
</feature>
<feature type="region of interest" description="Y2" evidence="30">
    <location>
        <begin position="2267"/>
        <end position="2356"/>
    </location>
</feature>
<feature type="region of interest" description="Y3" evidence="30">
    <location>
        <begin position="2357"/>
        <end position="2414"/>
    </location>
</feature>
<feature type="region of interest" description="Y4" evidence="30">
    <location>
        <begin position="2415"/>
        <end position="2516"/>
    </location>
</feature>
<feature type="region of interest" description="HD2">
    <location>
        <begin position="2528"/>
        <end position="2883"/>
    </location>
</feature>
<feature type="region of interest" description="HD3">
    <location>
        <begin position="3336"/>
        <end position="3520"/>
    </location>
</feature>
<feature type="region of interest" description="RdRp Fingers N-ter" evidence="15">
    <location>
        <begin position="4462"/>
        <end position="4676"/>
    </location>
</feature>
<feature type="region of interest" description="RdRp Palm N-ter" evidence="15">
    <location>
        <begin position="4677"/>
        <end position="4715"/>
    </location>
</feature>
<feature type="region of interest" description="RdRp Fingers C-ter" evidence="15">
    <location>
        <begin position="4716"/>
        <end position="4774"/>
    </location>
</feature>
<feature type="region of interest" description="RdRp Palm C-ter" evidence="15">
    <location>
        <begin position="4775"/>
        <end position="4910"/>
    </location>
</feature>
<feature type="region of interest" description="RdRp Thumb" evidence="15">
    <location>
        <begin position="4911"/>
        <end position="5027"/>
    </location>
</feature>
<feature type="region of interest" description="GpppA-binding" evidence="21">
    <location>
        <begin position="6031"/>
        <end position="6045"/>
    </location>
</feature>
<feature type="active site" description="For PL1-PRO activity" evidence="9">
    <location>
        <position position="1091"/>
    </location>
</feature>
<feature type="active site" description="For PL1-PRO activity" evidence="9">
    <location>
        <position position="1239"/>
    </location>
</feature>
<feature type="active site" description="For PL1-PRO activity" evidence="9">
    <location>
        <position position="1252"/>
    </location>
</feature>
<feature type="active site" description="For PL2-PRO activity" evidence="9">
    <location>
        <position position="1729"/>
    </location>
</feature>
<feature type="active site" description="For PL2-PRO activity" evidence="9">
    <location>
        <position position="1888"/>
    </location>
</feature>
<feature type="active site" description="For PL2-PRO activity" evidence="9">
    <location>
        <position position="1901"/>
    </location>
</feature>
<feature type="active site" description="For 3CL-PRO activity" evidence="11 35">
    <location>
        <position position="3038"/>
    </location>
</feature>
<feature type="active site" description="For 3CL-PRO activity" evidence="11 35">
    <location>
        <position position="3141"/>
    </location>
</feature>
<feature type="active site" description="For RNA-directed RNA polymerase activity" evidence="15">
    <location>
        <position position="4854"/>
    </location>
</feature>
<feature type="active site" description="For RNA-directed RNA polymerase activity" evidence="15">
    <location>
        <position position="4855"/>
    </location>
</feature>
<feature type="active site" description="For RNA-directed RNA polymerase activity" evidence="15">
    <location>
        <position position="4856"/>
    </location>
</feature>
<feature type="active site" description="For exoribonuclease activity" evidence="20">
    <location>
        <position position="5714"/>
    </location>
</feature>
<feature type="active site" description="For exoribonuclease activity" evidence="20">
    <location>
        <position position="5716"/>
    </location>
</feature>
<feature type="active site" description="For exoribonuclease activity" evidence="20">
    <location>
        <position position="5815"/>
    </location>
</feature>
<feature type="active site" description="For exoribonuclease activity" evidence="20">
    <location>
        <position position="5891"/>
    </location>
</feature>
<feature type="active site" description="For exoribonuclease activity" evidence="20">
    <location>
        <position position="5896"/>
    </location>
</feature>
<feature type="active site" description="For uridylate-specific endoribonuclease activity" evidence="23">
    <location>
        <position position="6367"/>
    </location>
</feature>
<feature type="active site" description="For uridylate-specific endoribonuclease activity" evidence="23">
    <location>
        <position position="6382"/>
    </location>
</feature>
<feature type="active site" description="For uridylate-specific endoribonuclease activity" evidence="23">
    <location>
        <position position="6423"/>
    </location>
</feature>
<feature type="active site" description="For 2'-O-methyltransferase" evidence="22">
    <location>
        <position position="6525"/>
    </location>
</feature>
<feature type="active site" description="For 2'-O-methyltransferase" evidence="22">
    <location>
        <position position="6609"/>
    </location>
</feature>
<feature type="active site" description="For 2'-O-methyltransferase" evidence="22">
    <location>
        <position position="6649"/>
    </location>
</feature>
<feature type="active site" description="For 2'-O-methyltransferase" evidence="22">
    <location>
        <position position="6682"/>
    </location>
</feature>
<feature type="binding site" evidence="37">
    <location>
        <position position="59"/>
    </location>
    <ligand>
        <name>ssDNA</name>
        <dbReference type="ChEBI" id="CHEBI:9160"/>
    </ligand>
</feature>
<feature type="binding site" evidence="37">
    <location>
        <position position="95"/>
    </location>
    <ligand>
        <name>ssDNA</name>
        <dbReference type="ChEBI" id="CHEBI:9160"/>
    </ligand>
</feature>
<feature type="binding site" evidence="37">
    <location>
        <position position="99"/>
    </location>
    <ligand>
        <name>ssDNA</name>
        <dbReference type="ChEBI" id="CHEBI:9160"/>
    </ligand>
</feature>
<feature type="binding site" evidence="37">
    <location>
        <position position="102"/>
    </location>
    <ligand>
        <name>ssDNA</name>
        <dbReference type="ChEBI" id="CHEBI:9160"/>
    </ligand>
</feature>
<feature type="binding site" evidence="30">
    <location>
        <position position="2180"/>
    </location>
    <ligand>
        <name>Zn(2+)</name>
        <dbReference type="ChEBI" id="CHEBI:29105"/>
        <label>1</label>
    </ligand>
</feature>
<feature type="binding site" evidence="30">
    <location>
        <position position="2185"/>
    </location>
    <ligand>
        <name>Zn(2+)</name>
        <dbReference type="ChEBI" id="CHEBI:29105"/>
        <label>1</label>
    </ligand>
</feature>
<feature type="binding site" evidence="30">
    <location>
        <position position="2190"/>
    </location>
    <ligand>
        <name>Zn(2+)</name>
        <dbReference type="ChEBI" id="CHEBI:29105"/>
        <label>1</label>
    </ligand>
</feature>
<feature type="binding site" evidence="30">
    <location>
        <position position="2193"/>
    </location>
    <ligand>
        <name>Zn(2+)</name>
        <dbReference type="ChEBI" id="CHEBI:29105"/>
        <label>1</label>
    </ligand>
</feature>
<feature type="binding site" evidence="30">
    <location>
        <position position="2226"/>
    </location>
    <ligand>
        <name>Zn(2+)</name>
        <dbReference type="ChEBI" id="CHEBI:29105"/>
        <label>2</label>
    </ligand>
</feature>
<feature type="binding site" evidence="30">
    <location>
        <position position="2229"/>
    </location>
    <ligand>
        <name>Zn(2+)</name>
        <dbReference type="ChEBI" id="CHEBI:29105"/>
        <label>2</label>
    </ligand>
</feature>
<feature type="binding site" evidence="30">
    <location>
        <position position="2233"/>
    </location>
    <ligand>
        <name>Zn(2+)</name>
        <dbReference type="ChEBI" id="CHEBI:29105"/>
        <label>2</label>
    </ligand>
</feature>
<feature type="binding site" evidence="30">
    <location>
        <position position="2236"/>
    </location>
    <ligand>
        <name>Zn(2+)</name>
        <dbReference type="ChEBI" id="CHEBI:29105"/>
        <label>2</label>
    </ligand>
</feature>
<feature type="binding site" evidence="19">
    <location>
        <position position="4039"/>
    </location>
    <ligand>
        <name>Zn(2+)</name>
        <dbReference type="ChEBI" id="CHEBI:29105"/>
        <label>3</label>
    </ligand>
</feature>
<feature type="binding site" evidence="19">
    <location>
        <position position="4042"/>
    </location>
    <ligand>
        <name>Zn(2+)</name>
        <dbReference type="ChEBI" id="CHEBI:29105"/>
        <label>3</label>
    </ligand>
</feature>
<feature type="binding site" evidence="19">
    <location>
        <position position="4048"/>
    </location>
    <ligand>
        <name>Zn(2+)</name>
        <dbReference type="ChEBI" id="CHEBI:29105"/>
        <label>3</label>
    </ligand>
</feature>
<feature type="binding site" evidence="19">
    <location>
        <position position="4055"/>
    </location>
    <ligand>
        <name>Zn(2+)</name>
        <dbReference type="ChEBI" id="CHEBI:29105"/>
        <label>3</label>
    </ligand>
</feature>
<feature type="binding site" evidence="19">
    <location>
        <position position="4081"/>
    </location>
    <ligand>
        <name>Zn(2+)</name>
        <dbReference type="ChEBI" id="CHEBI:29105"/>
        <label>4</label>
    </ligand>
</feature>
<feature type="binding site" evidence="19">
    <location>
        <position position="4084"/>
    </location>
    <ligand>
        <name>Zn(2+)</name>
        <dbReference type="ChEBI" id="CHEBI:29105"/>
        <label>4</label>
    </ligand>
</feature>
<feature type="binding site" evidence="19">
    <location>
        <position position="4092"/>
    </location>
    <ligand>
        <name>Zn(2+)</name>
        <dbReference type="ChEBI" id="CHEBI:29105"/>
        <label>4</label>
    </ligand>
</feature>
<feature type="binding site" evidence="19">
    <location>
        <position position="4094"/>
    </location>
    <ligand>
        <name>Zn(2+)</name>
        <dbReference type="ChEBI" id="CHEBI:29105"/>
        <label>4</label>
    </ligand>
</feature>
<feature type="binding site" evidence="32">
    <location>
        <position position="4390"/>
    </location>
    <ligand>
        <name>Zn(2+)</name>
        <dbReference type="ChEBI" id="CHEBI:29105"/>
        <label>5</label>
    </ligand>
</feature>
<feature type="binding site" evidence="32">
    <location>
        <position position="4396"/>
    </location>
    <ligand>
        <name>Zn(2+)</name>
        <dbReference type="ChEBI" id="CHEBI:29105"/>
        <label>5</label>
    </ligand>
</feature>
<feature type="binding site" evidence="32">
    <location>
        <position position="4401"/>
    </location>
    <ligand>
        <name>Zn(2+)</name>
        <dbReference type="ChEBI" id="CHEBI:29105"/>
        <label>5</label>
    </ligand>
</feature>
<feature type="binding site" evidence="32">
    <location>
        <position position="4405"/>
    </location>
    <ligand>
        <name>Zn(2+)</name>
        <dbReference type="ChEBI" id="CHEBI:29105"/>
        <label>5</label>
    </ligand>
</feature>
<feature type="binding site" evidence="15">
    <location>
        <position position="4582"/>
    </location>
    <ligand>
        <name>Zn(2+)</name>
        <dbReference type="ChEBI" id="CHEBI:29105"/>
        <label>6</label>
    </ligand>
</feature>
<feature type="binding site" evidence="15">
    <location>
        <position position="4737"/>
    </location>
    <ligand>
        <name>Zn(2+)</name>
        <dbReference type="ChEBI" id="CHEBI:29105"/>
        <label>6</label>
    </ligand>
</feature>
<feature type="binding site" evidence="15">
    <location>
        <position position="4740"/>
    </location>
    <ligand>
        <name>Zn(2+)</name>
        <dbReference type="ChEBI" id="CHEBI:29105"/>
        <label>6</label>
    </ligand>
</feature>
<feature type="binding site" evidence="15">
    <location>
        <position position="4741"/>
    </location>
    <ligand>
        <name>Zn(2+)</name>
        <dbReference type="ChEBI" id="CHEBI:29105"/>
        <label>6</label>
    </ligand>
</feature>
<feature type="binding site" evidence="12">
    <location>
        <position position="5032"/>
    </location>
    <ligand>
        <name>Zn(2+)</name>
        <dbReference type="ChEBI" id="CHEBI:29105"/>
        <label>7</label>
    </ligand>
</feature>
<feature type="binding site" evidence="12">
    <location>
        <position position="5035"/>
    </location>
    <ligand>
        <name>Zn(2+)</name>
        <dbReference type="ChEBI" id="CHEBI:29105"/>
        <label>7</label>
    </ligand>
</feature>
<feature type="binding site" evidence="12">
    <location>
        <position position="5043"/>
    </location>
    <ligand>
        <name>Zn(2+)</name>
        <dbReference type="ChEBI" id="CHEBI:29105"/>
        <label>8</label>
    </ligand>
</feature>
<feature type="binding site" evidence="12">
    <location>
        <position position="5046"/>
    </location>
    <ligand>
        <name>Zn(2+)</name>
        <dbReference type="ChEBI" id="CHEBI:29105"/>
        <label>8</label>
    </ligand>
</feature>
<feature type="binding site" evidence="12">
    <location>
        <position position="5053"/>
    </location>
    <ligand>
        <name>Zn(2+)</name>
        <dbReference type="ChEBI" id="CHEBI:29105"/>
        <label>7</label>
    </ligand>
</feature>
<feature type="binding site" evidence="12">
    <location>
        <position position="5056"/>
    </location>
    <ligand>
        <name>Zn(2+)</name>
        <dbReference type="ChEBI" id="CHEBI:29105"/>
        <label>7</label>
    </ligand>
</feature>
<feature type="binding site" evidence="12">
    <location>
        <position position="5060"/>
    </location>
    <ligand>
        <name>Zn(2+)</name>
        <dbReference type="ChEBI" id="CHEBI:29105"/>
        <label>8</label>
    </ligand>
</feature>
<feature type="binding site" evidence="12">
    <location>
        <position position="5066"/>
    </location>
    <ligand>
        <name>Zn(2+)</name>
        <dbReference type="ChEBI" id="CHEBI:29105"/>
        <label>8</label>
    </ligand>
</feature>
<feature type="binding site" evidence="12">
    <location>
        <position position="5077"/>
    </location>
    <ligand>
        <name>Zn(2+)</name>
        <dbReference type="ChEBI" id="CHEBI:29105"/>
        <label>9</label>
    </ligand>
</feature>
<feature type="binding site" evidence="12">
    <location>
        <position position="5082"/>
    </location>
    <ligand>
        <name>Zn(2+)</name>
        <dbReference type="ChEBI" id="CHEBI:29105"/>
        <label>9</label>
    </ligand>
</feature>
<feature type="binding site" evidence="12">
    <location>
        <position position="5099"/>
    </location>
    <ligand>
        <name>Zn(2+)</name>
        <dbReference type="ChEBI" id="CHEBI:29105"/>
        <label>9</label>
    </ligand>
</feature>
<feature type="binding site" evidence="12">
    <location>
        <position position="5102"/>
    </location>
    <ligand>
        <name>Zn(2+)</name>
        <dbReference type="ChEBI" id="CHEBI:29105"/>
        <label>9</label>
    </ligand>
</feature>
<feature type="binding site" evidence="1">
    <location>
        <begin position="5310"/>
        <end position="5317"/>
    </location>
    <ligand>
        <name>ATP</name>
        <dbReference type="ChEBI" id="CHEBI:30616"/>
    </ligand>
</feature>
<feature type="binding site" evidence="20">
    <location>
        <position position="5831"/>
    </location>
    <ligand>
        <name>Zn(2+)</name>
        <dbReference type="ChEBI" id="CHEBI:29105"/>
        <label>10</label>
    </ligand>
</feature>
<feature type="binding site" evidence="20">
    <location>
        <position position="5833"/>
    </location>
    <ligand>
        <name>Zn(2+)</name>
        <dbReference type="ChEBI" id="CHEBI:29105"/>
        <label>10</label>
    </ligand>
</feature>
<feature type="binding site" evidence="20">
    <location>
        <position position="5849"/>
    </location>
    <ligand>
        <name>Zn(2+)</name>
        <dbReference type="ChEBI" id="CHEBI:29105"/>
        <label>10</label>
    </ligand>
</feature>
<feature type="binding site" evidence="20">
    <location>
        <position position="5852"/>
    </location>
    <ligand>
        <name>Zn(2+)</name>
        <dbReference type="ChEBI" id="CHEBI:29105"/>
        <label>10</label>
    </ligand>
</feature>
<feature type="binding site" evidence="20">
    <location>
        <position position="5880"/>
    </location>
    <ligand>
        <name>Zn(2+)</name>
        <dbReference type="ChEBI" id="CHEBI:29105"/>
        <label>11</label>
    </ligand>
</feature>
<feature type="binding site" evidence="20">
    <location>
        <position position="5884"/>
    </location>
    <ligand>
        <name>Zn(2+)</name>
        <dbReference type="ChEBI" id="CHEBI:29105"/>
        <label>11</label>
    </ligand>
</feature>
<feature type="binding site" evidence="20">
    <location>
        <position position="5887"/>
    </location>
    <ligand>
        <name>Zn(2+)</name>
        <dbReference type="ChEBI" id="CHEBI:29105"/>
        <label>11</label>
    </ligand>
</feature>
<feature type="binding site" evidence="20">
    <location>
        <position position="5902"/>
    </location>
    <ligand>
        <name>Zn(2+)</name>
        <dbReference type="ChEBI" id="CHEBI:29105"/>
        <label>11</label>
    </ligand>
</feature>
<feature type="binding site" evidence="21">
    <location>
        <begin position="5954"/>
        <end position="5960"/>
    </location>
    <ligand>
        <name>S-adenosyl-L-methionine</name>
        <dbReference type="ChEBI" id="CHEBI:59789"/>
    </ligand>
</feature>
<feature type="binding site" evidence="21">
    <location>
        <position position="6069"/>
    </location>
    <ligand>
        <name>Zn(2+)</name>
        <dbReference type="ChEBI" id="CHEBI:29105"/>
        <label>12</label>
    </ligand>
</feature>
<feature type="binding site" evidence="21">
    <location>
        <position position="6086"/>
    </location>
    <ligand>
        <name>Zn(2+)</name>
        <dbReference type="ChEBI" id="CHEBI:29105"/>
        <label>12</label>
    </ligand>
</feature>
<feature type="binding site" evidence="21">
    <location>
        <position position="6097"/>
    </location>
    <ligand>
        <name>Zn(2+)</name>
        <dbReference type="ChEBI" id="CHEBI:29105"/>
        <label>12</label>
    </ligand>
</feature>
<feature type="binding site" evidence="21">
    <location>
        <position position="6100"/>
    </location>
    <ligand>
        <name>Zn(2+)</name>
        <dbReference type="ChEBI" id="CHEBI:29105"/>
        <label>12</label>
    </ligand>
</feature>
<feature type="site" description="Cleavage; by PL1-PRO" evidence="1">
    <location>
        <begin position="110"/>
        <end position="111"/>
    </location>
</feature>
<feature type="site" description="Cleavage; by PL1-PRO" evidence="1">
    <location>
        <begin position="895"/>
        <end position="896"/>
    </location>
</feature>
<feature type="site" description="Cleavage; by PL2-PRO" evidence="1">
    <location>
        <begin position="2516"/>
        <end position="2517"/>
    </location>
</feature>
<feature type="site" description="Cleavage; by 3CL-PRO" evidence="41">
    <location>
        <begin position="2997"/>
        <end position="2998"/>
    </location>
</feature>
<feature type="site" description="Cleavage; by 3CL-PRO" evidence="41">
    <location>
        <begin position="3299"/>
        <end position="3300"/>
    </location>
</feature>
<feature type="site" description="Cleavage; by 3CL-PRO" evidence="41">
    <location>
        <begin position="3579"/>
        <end position="3580"/>
    </location>
</feature>
<feature type="site" description="Cleavage; by 3CL-PRO" evidence="41">
    <location>
        <begin position="3662"/>
        <end position="3663"/>
    </location>
</feature>
<feature type="site" description="Cleavage; by 3CL-PRO" evidence="41">
    <location>
        <begin position="3857"/>
        <end position="3858"/>
    </location>
</feature>
<feature type="site" description="Cleavage; by 3CL-PRO" evidence="41">
    <location>
        <begin position="3965"/>
        <end position="3966"/>
    </location>
</feature>
<feature type="site" description="Cleavage; by 3CL-PRO" evidence="41">
    <location>
        <begin position="4100"/>
        <end position="4101"/>
    </location>
</feature>
<feature type="site" description="Cleavage; by 3CL-PRO" evidence="41">
    <location>
        <begin position="5027"/>
        <end position="5028"/>
    </location>
</feature>
<feature type="site" description="Cleavage; by 3CL-PRO" evidence="41">
    <location>
        <begin position="5546"/>
        <end position="5547"/>
    </location>
</feature>
<feature type="site" description="Cleavage; by 3CL-PRO" evidence="41">
    <location>
        <begin position="6141"/>
        <end position="6142"/>
    </location>
</feature>
<feature type="site" description="Cleavage; by 3CL-PRO" evidence="41">
    <location>
        <begin position="6480"/>
        <end position="6481"/>
    </location>
</feature>
<feature type="disulfide bond" evidence="31">
    <location>
        <begin position="2054"/>
        <end position="2080"/>
    </location>
</feature>
<feature type="disulfide bond" evidence="31">
    <location>
        <begin position="2072"/>
        <end position="2077"/>
    </location>
</feature>
<feature type="disulfide bond" description="Interchain" evidence="37">
    <location>
        <position position="3916"/>
    </location>
</feature>
<feature type="mutagenesis site" description="Complete loss of dimerization. 2.7-fold reduction in ssDNA binding." evidence="37">
    <original>C</original>
    <variation>A</variation>
    <location>
        <position position="3916"/>
    </location>
</feature>
<feature type="mutagenesis site" description="14-fold reduction in ssDNA binding." evidence="37">
    <original>GAVLGYIG</original>
    <variation>EAVLEYIE</variation>
    <location>
        <begin position="3952"/>
        <end position="3959"/>
    </location>
</feature>
<feature type="mutagenesis site" description="97% loss of G-N-7 MTase activity." evidence="38">
    <original>D</original>
    <variation>A</variation>
    <location>
        <position position="5954"/>
    </location>
</feature>
<feature type="mutagenesis site" description="95% loss of G-N-7 MTase activity." evidence="38">
    <original>G</original>
    <variation>A</variation>
    <location>
        <position position="5956"/>
    </location>
</feature>
<feature type="mutagenesis site" description="85% loss of G-N-7 MTase activity." evidence="38">
    <original>PK</original>
    <variation>AA</variation>
    <location>
        <begin position="5958"/>
        <end position="5959"/>
    </location>
</feature>
<feature type="mutagenesis site" description="71% loss of G-N-7 MTase activity. Higher type I and III interferon response by the host." evidence="38">
    <original>D</original>
    <variation>A</variation>
    <location>
        <position position="5974"/>
    </location>
</feature>
<feature type="mutagenesis site" description="Loss of reduction of the expression levels of host TBK1 and IRF3." evidence="39">
    <original>H</original>
    <variation>A</variation>
    <location>
        <position position="6367"/>
    </location>
</feature>
<feature type="mutagenesis site" description="Loss of reduction of the expression levels of host TBK1 and IRF3." evidence="39">
    <original>H</original>
    <variation>A</variation>
    <location>
        <position position="6382"/>
    </location>
</feature>
<feature type="mutagenesis site" description="No effect on the reduction of the expression levels of host TBK1 and IRF3." evidence="39">
    <original>D</original>
    <variation>A</variation>
    <location>
        <position position="6406"/>
    </location>
</feature>
<feature type="mutagenesis site" description="Loss of reduction of the expression levels of host TBK1 and IRF3." evidence="39">
    <original>K</original>
    <variation>A</variation>
    <location>
        <position position="6423"/>
    </location>
</feature>
<feature type="strand" evidence="45">
    <location>
        <begin position="3867"/>
        <end position="3874"/>
    </location>
</feature>
<feature type="strand" evidence="45">
    <location>
        <begin position="3879"/>
        <end position="3888"/>
    </location>
</feature>
<feature type="strand" evidence="45">
    <location>
        <begin position="3893"/>
        <end position="3903"/>
    </location>
</feature>
<feature type="strand" evidence="45">
    <location>
        <begin position="3907"/>
        <end position="3910"/>
    </location>
</feature>
<feature type="strand" evidence="45">
    <location>
        <begin position="3917"/>
        <end position="3921"/>
    </location>
</feature>
<feature type="strand" evidence="45">
    <location>
        <begin position="3925"/>
        <end position="3930"/>
    </location>
</feature>
<feature type="strand" evidence="45">
    <location>
        <begin position="3932"/>
        <end position="3943"/>
    </location>
</feature>
<feature type="helix" evidence="45">
    <location>
        <begin position="3948"/>
        <end position="3958"/>
    </location>
</feature>